<proteinExistence type="evidence at protein level"/>
<accession>P0DOY9</accession>
<accession>Q5SHQ2</accession>
<evidence type="ECO:0000269" key="1">
    <source>
    </source>
</evidence>
<evidence type="ECO:0000305" key="2"/>
<evidence type="ECO:0007829" key="3">
    <source>
        <dbReference type="PDB" id="1FJG"/>
    </source>
</evidence>
<evidence type="ECO:0007829" key="4">
    <source>
        <dbReference type="PDB" id="1FKA"/>
    </source>
</evidence>
<evidence type="ECO:0007829" key="5">
    <source>
        <dbReference type="PDB" id="2UUB"/>
    </source>
</evidence>
<evidence type="ECO:0007829" key="6">
    <source>
        <dbReference type="PDB" id="2UXC"/>
    </source>
</evidence>
<evidence type="ECO:0007829" key="7">
    <source>
        <dbReference type="PDB" id="2VQE"/>
    </source>
</evidence>
<feature type="chain" id="PRO_0000126511" description="Small ribosomal subunit protein uS8">
    <location>
        <begin position="1"/>
        <end position="138"/>
    </location>
</feature>
<feature type="helix" evidence="7">
    <location>
        <begin position="5"/>
        <end position="18"/>
    </location>
</feature>
<feature type="strand" evidence="5">
    <location>
        <begin position="22"/>
        <end position="24"/>
    </location>
</feature>
<feature type="strand" evidence="3">
    <location>
        <begin position="25"/>
        <end position="27"/>
    </location>
</feature>
<feature type="helix" evidence="7">
    <location>
        <begin position="30"/>
        <end position="41"/>
    </location>
</feature>
<feature type="strand" evidence="7">
    <location>
        <begin position="44"/>
        <end position="53"/>
    </location>
</feature>
<feature type="strand" evidence="7">
    <location>
        <begin position="56"/>
        <end position="62"/>
    </location>
</feature>
<feature type="strand" evidence="7">
    <location>
        <begin position="70"/>
        <end position="72"/>
    </location>
</feature>
<feature type="strand" evidence="5">
    <location>
        <begin position="78"/>
        <end position="80"/>
    </location>
</feature>
<feature type="strand" evidence="7">
    <location>
        <begin position="81"/>
        <end position="85"/>
    </location>
</feature>
<feature type="strand" evidence="4">
    <location>
        <begin position="86"/>
        <end position="88"/>
    </location>
</feature>
<feature type="strand" evidence="6">
    <location>
        <begin position="89"/>
        <end position="91"/>
    </location>
</feature>
<feature type="helix" evidence="7">
    <location>
        <begin position="97"/>
        <end position="99"/>
    </location>
</feature>
<feature type="helix" evidence="7">
    <location>
        <begin position="103"/>
        <end position="106"/>
    </location>
</feature>
<feature type="strand" evidence="7">
    <location>
        <begin position="108"/>
        <end position="114"/>
    </location>
</feature>
<feature type="strand" evidence="7">
    <location>
        <begin position="117"/>
        <end position="120"/>
    </location>
</feature>
<feature type="helix" evidence="7">
    <location>
        <begin position="121"/>
        <end position="126"/>
    </location>
</feature>
<feature type="strand" evidence="7">
    <location>
        <begin position="131"/>
        <end position="138"/>
    </location>
</feature>
<organism>
    <name type="scientific">Thermus thermophilus (strain ATCC 27634 / DSM 579 / HB8)</name>
    <dbReference type="NCBI Taxonomy" id="300852"/>
    <lineage>
        <taxon>Bacteria</taxon>
        <taxon>Thermotogati</taxon>
        <taxon>Deinococcota</taxon>
        <taxon>Deinococci</taxon>
        <taxon>Thermales</taxon>
        <taxon>Thermaceae</taxon>
        <taxon>Thermus</taxon>
    </lineage>
</organism>
<sequence>MLTDPIADMLTRIRNATRVYKESTDVPASRFKEEILRILAREGFIKGYERVDVDGKPYLRVYLKYGPRRQGPDPRPEQVIHHIRRISKPGRRVYVGVKEIPRVRRGLGIAILSTSKGVLTDREARKLGVGGELICEVW</sequence>
<gene>
    <name type="primary">rpsH</name>
    <name type="ordered locus">TTHA1678</name>
</gene>
<protein>
    <recommendedName>
        <fullName evidence="2">Small ribosomal subunit protein uS8</fullName>
    </recommendedName>
    <alternativeName>
        <fullName>30S ribosomal protein S8</fullName>
    </alternativeName>
</protein>
<dbReference type="EMBL" id="AP008226">
    <property type="protein sequence ID" value="BAD71501.1"/>
    <property type="molecule type" value="Genomic_DNA"/>
</dbReference>
<dbReference type="PIR" id="S15441">
    <property type="entry name" value="S15441"/>
</dbReference>
<dbReference type="RefSeq" id="WP_011173705.1">
    <property type="nucleotide sequence ID" value="NC_006461.1"/>
</dbReference>
<dbReference type="RefSeq" id="YP_144944.1">
    <property type="nucleotide sequence ID" value="NC_006461.1"/>
</dbReference>
<dbReference type="PDB" id="1EMI">
    <property type="method" value="X-ray"/>
    <property type="resolution" value="7.50 A"/>
    <property type="chains" value="A=3-138"/>
</dbReference>
<dbReference type="PDB" id="1FJG">
    <property type="method" value="X-ray"/>
    <property type="resolution" value="3.00 A"/>
    <property type="chains" value="H=1-138"/>
</dbReference>
<dbReference type="PDB" id="1FKA">
    <property type="method" value="X-ray"/>
    <property type="resolution" value="3.30 A"/>
    <property type="chains" value="H=1-138"/>
</dbReference>
<dbReference type="PDB" id="1HNW">
    <property type="method" value="X-ray"/>
    <property type="resolution" value="3.40 A"/>
    <property type="chains" value="H=1-138"/>
</dbReference>
<dbReference type="PDB" id="1HNX">
    <property type="method" value="X-ray"/>
    <property type="resolution" value="3.40 A"/>
    <property type="chains" value="H=1-138"/>
</dbReference>
<dbReference type="PDB" id="1HNZ">
    <property type="method" value="X-ray"/>
    <property type="resolution" value="3.30 A"/>
    <property type="chains" value="H=1-138"/>
</dbReference>
<dbReference type="PDB" id="1HR0">
    <property type="method" value="X-ray"/>
    <property type="resolution" value="3.20 A"/>
    <property type="chains" value="H=1-138"/>
</dbReference>
<dbReference type="PDB" id="1I94">
    <property type="method" value="X-ray"/>
    <property type="resolution" value="3.20 A"/>
    <property type="chains" value="H=1-138"/>
</dbReference>
<dbReference type="PDB" id="1I95">
    <property type="method" value="X-ray"/>
    <property type="resolution" value="4.50 A"/>
    <property type="chains" value="H=1-138"/>
</dbReference>
<dbReference type="PDB" id="1I96">
    <property type="method" value="X-ray"/>
    <property type="resolution" value="4.20 A"/>
    <property type="chains" value="H=1-138"/>
</dbReference>
<dbReference type="PDB" id="1I97">
    <property type="method" value="X-ray"/>
    <property type="resolution" value="4.50 A"/>
    <property type="chains" value="H=1-138"/>
</dbReference>
<dbReference type="PDB" id="1IBK">
    <property type="method" value="X-ray"/>
    <property type="resolution" value="3.31 A"/>
    <property type="chains" value="H=1-138"/>
</dbReference>
<dbReference type="PDB" id="1IBL">
    <property type="method" value="X-ray"/>
    <property type="resolution" value="3.11 A"/>
    <property type="chains" value="H=1-138"/>
</dbReference>
<dbReference type="PDB" id="1IBM">
    <property type="method" value="X-ray"/>
    <property type="resolution" value="3.31 A"/>
    <property type="chains" value="H=1-138"/>
</dbReference>
<dbReference type="PDB" id="1J5E">
    <property type="method" value="X-ray"/>
    <property type="resolution" value="3.05 A"/>
    <property type="chains" value="H=1-138"/>
</dbReference>
<dbReference type="PDB" id="1JGO">
    <property type="method" value="X-ray"/>
    <property type="resolution" value="5.60 A"/>
    <property type="chains" value="K=1-138"/>
</dbReference>
<dbReference type="PDB" id="1JGP">
    <property type="method" value="X-ray"/>
    <property type="resolution" value="7.00 A"/>
    <property type="chains" value="K=1-138"/>
</dbReference>
<dbReference type="PDB" id="1JGQ">
    <property type="method" value="X-ray"/>
    <property type="resolution" value="5.00 A"/>
    <property type="chains" value="K=1-138"/>
</dbReference>
<dbReference type="PDB" id="1ML5">
    <property type="method" value="EM"/>
    <property type="resolution" value="14.00 A"/>
    <property type="chains" value="K=1-138"/>
</dbReference>
<dbReference type="PDB" id="1N32">
    <property type="method" value="X-ray"/>
    <property type="resolution" value="3.00 A"/>
    <property type="chains" value="H=1-138"/>
</dbReference>
<dbReference type="PDB" id="1N33">
    <property type="method" value="X-ray"/>
    <property type="resolution" value="3.35 A"/>
    <property type="chains" value="H=1-138"/>
</dbReference>
<dbReference type="PDB" id="1N34">
    <property type="method" value="X-ray"/>
    <property type="resolution" value="3.80 A"/>
    <property type="chains" value="H=1-138"/>
</dbReference>
<dbReference type="PDB" id="1N36">
    <property type="method" value="X-ray"/>
    <property type="resolution" value="3.65 A"/>
    <property type="chains" value="H=1-138"/>
</dbReference>
<dbReference type="PDB" id="1QD7">
    <property type="method" value="X-ray"/>
    <property type="resolution" value="5.50 A"/>
    <property type="chains" value="G=3-138"/>
</dbReference>
<dbReference type="PDB" id="1VVJ">
    <property type="method" value="X-ray"/>
    <property type="resolution" value="3.44 A"/>
    <property type="chains" value="QH/XH=1-138"/>
</dbReference>
<dbReference type="PDB" id="1VY4">
    <property type="method" value="X-ray"/>
    <property type="resolution" value="2.60 A"/>
    <property type="chains" value="AH/CH=1-138"/>
</dbReference>
<dbReference type="PDB" id="1VY5">
    <property type="method" value="X-ray"/>
    <property type="resolution" value="2.55 A"/>
    <property type="chains" value="AH/CH=1-138"/>
</dbReference>
<dbReference type="PDB" id="1VY6">
    <property type="method" value="X-ray"/>
    <property type="resolution" value="2.90 A"/>
    <property type="chains" value="AH/CH=1-138"/>
</dbReference>
<dbReference type="PDB" id="1VY7">
    <property type="method" value="X-ray"/>
    <property type="resolution" value="2.80 A"/>
    <property type="chains" value="AH/CH=1-138"/>
</dbReference>
<dbReference type="PDB" id="1XMO">
    <property type="method" value="X-ray"/>
    <property type="resolution" value="3.25 A"/>
    <property type="chains" value="H=1-138"/>
</dbReference>
<dbReference type="PDB" id="1XMQ">
    <property type="method" value="X-ray"/>
    <property type="resolution" value="3.00 A"/>
    <property type="chains" value="H=1-138"/>
</dbReference>
<dbReference type="PDB" id="1XNQ">
    <property type="method" value="X-ray"/>
    <property type="resolution" value="3.05 A"/>
    <property type="chains" value="H=1-138"/>
</dbReference>
<dbReference type="PDB" id="1XNR">
    <property type="method" value="X-ray"/>
    <property type="resolution" value="3.10 A"/>
    <property type="chains" value="H=1-138"/>
</dbReference>
<dbReference type="PDB" id="2E5L">
    <property type="method" value="X-ray"/>
    <property type="resolution" value="3.30 A"/>
    <property type="chains" value="H=1-138"/>
</dbReference>
<dbReference type="PDB" id="2F4V">
    <property type="method" value="X-ray"/>
    <property type="resolution" value="3.80 A"/>
    <property type="chains" value="H=1-138"/>
</dbReference>
<dbReference type="PDB" id="2HHH">
    <property type="method" value="X-ray"/>
    <property type="resolution" value="3.35 A"/>
    <property type="chains" value="H=1-138"/>
</dbReference>
<dbReference type="PDB" id="2UU9">
    <property type="method" value="X-ray"/>
    <property type="resolution" value="3.10 A"/>
    <property type="chains" value="H=1-138"/>
</dbReference>
<dbReference type="PDB" id="2UUA">
    <property type="method" value="X-ray"/>
    <property type="resolution" value="2.90 A"/>
    <property type="chains" value="H=1-138"/>
</dbReference>
<dbReference type="PDB" id="2UUB">
    <property type="method" value="X-ray"/>
    <property type="resolution" value="2.90 A"/>
    <property type="chains" value="H=1-138"/>
</dbReference>
<dbReference type="PDB" id="2UUC">
    <property type="method" value="X-ray"/>
    <property type="resolution" value="3.10 A"/>
    <property type="chains" value="H=1-138"/>
</dbReference>
<dbReference type="PDB" id="2UXB">
    <property type="method" value="X-ray"/>
    <property type="resolution" value="3.10 A"/>
    <property type="chains" value="H=1-138"/>
</dbReference>
<dbReference type="PDB" id="2UXC">
    <property type="method" value="X-ray"/>
    <property type="resolution" value="2.90 A"/>
    <property type="chains" value="H=1-138"/>
</dbReference>
<dbReference type="PDB" id="2UXD">
    <property type="method" value="X-ray"/>
    <property type="resolution" value="3.20 A"/>
    <property type="chains" value="H=1-138"/>
</dbReference>
<dbReference type="PDB" id="2VQE">
    <property type="method" value="X-ray"/>
    <property type="resolution" value="2.50 A"/>
    <property type="chains" value="H=1-138"/>
</dbReference>
<dbReference type="PDB" id="2VQF">
    <property type="method" value="X-ray"/>
    <property type="resolution" value="2.90 A"/>
    <property type="chains" value="H=1-138"/>
</dbReference>
<dbReference type="PDB" id="2ZM6">
    <property type="method" value="X-ray"/>
    <property type="resolution" value="3.30 A"/>
    <property type="chains" value="H=1-138"/>
</dbReference>
<dbReference type="PDB" id="3OTO">
    <property type="method" value="X-ray"/>
    <property type="resolution" value="3.69 A"/>
    <property type="chains" value="H=1-138"/>
</dbReference>
<dbReference type="PDB" id="3T1H">
    <property type="method" value="X-ray"/>
    <property type="resolution" value="3.11 A"/>
    <property type="chains" value="H=1-138"/>
</dbReference>
<dbReference type="PDB" id="3T1Y">
    <property type="method" value="X-ray"/>
    <property type="resolution" value="2.80 A"/>
    <property type="chains" value="H=1-138"/>
</dbReference>
<dbReference type="PDB" id="4AQY">
    <property type="method" value="X-ray"/>
    <property type="resolution" value="3.50 A"/>
    <property type="chains" value="H=1-138"/>
</dbReference>
<dbReference type="PDB" id="4B3M">
    <property type="method" value="X-ray"/>
    <property type="resolution" value="2.90 A"/>
    <property type="chains" value="H=1-138"/>
</dbReference>
<dbReference type="PDB" id="4B3R">
    <property type="method" value="X-ray"/>
    <property type="resolution" value="3.00 A"/>
    <property type="chains" value="H=1-138"/>
</dbReference>
<dbReference type="PDB" id="4B3S">
    <property type="method" value="X-ray"/>
    <property type="resolution" value="3.15 A"/>
    <property type="chains" value="H=1-138"/>
</dbReference>
<dbReference type="PDB" id="4B3T">
    <property type="method" value="X-ray"/>
    <property type="resolution" value="3.00 A"/>
    <property type="chains" value="H=1-138"/>
</dbReference>
<dbReference type="PDB" id="4DR1">
    <property type="method" value="X-ray"/>
    <property type="resolution" value="3.60 A"/>
    <property type="chains" value="H=1-138"/>
</dbReference>
<dbReference type="PDB" id="4DR2">
    <property type="method" value="X-ray"/>
    <property type="resolution" value="3.25 A"/>
    <property type="chains" value="H=1-138"/>
</dbReference>
<dbReference type="PDB" id="4DR3">
    <property type="method" value="X-ray"/>
    <property type="resolution" value="3.35 A"/>
    <property type="chains" value="H=1-138"/>
</dbReference>
<dbReference type="PDB" id="4DR4">
    <property type="method" value="X-ray"/>
    <property type="resolution" value="3.97 A"/>
    <property type="chains" value="H=1-138"/>
</dbReference>
<dbReference type="PDB" id="4DR5">
    <property type="method" value="X-ray"/>
    <property type="resolution" value="3.45 A"/>
    <property type="chains" value="H=1-138"/>
</dbReference>
<dbReference type="PDB" id="4DR6">
    <property type="method" value="X-ray"/>
    <property type="resolution" value="3.30 A"/>
    <property type="chains" value="H=1-138"/>
</dbReference>
<dbReference type="PDB" id="4DR7">
    <property type="method" value="X-ray"/>
    <property type="resolution" value="3.75 A"/>
    <property type="chains" value="H=1-138"/>
</dbReference>
<dbReference type="PDB" id="4DUY">
    <property type="method" value="X-ray"/>
    <property type="resolution" value="3.39 A"/>
    <property type="chains" value="H=1-138"/>
</dbReference>
<dbReference type="PDB" id="4DUZ">
    <property type="method" value="X-ray"/>
    <property type="resolution" value="3.65 A"/>
    <property type="chains" value="H=1-138"/>
</dbReference>
<dbReference type="PDB" id="4DV0">
    <property type="method" value="X-ray"/>
    <property type="resolution" value="3.85 A"/>
    <property type="chains" value="H=1-138"/>
</dbReference>
<dbReference type="PDB" id="4DV1">
    <property type="method" value="X-ray"/>
    <property type="resolution" value="3.85 A"/>
    <property type="chains" value="H=1-138"/>
</dbReference>
<dbReference type="PDB" id="4DV2">
    <property type="method" value="X-ray"/>
    <property type="resolution" value="3.65 A"/>
    <property type="chains" value="H=1-138"/>
</dbReference>
<dbReference type="PDB" id="4DV3">
    <property type="method" value="X-ray"/>
    <property type="resolution" value="3.55 A"/>
    <property type="chains" value="H=1-138"/>
</dbReference>
<dbReference type="PDB" id="4DV4">
    <property type="method" value="X-ray"/>
    <property type="resolution" value="3.65 A"/>
    <property type="chains" value="H=1-138"/>
</dbReference>
<dbReference type="PDB" id="4DV5">
    <property type="method" value="X-ray"/>
    <property type="resolution" value="3.68 A"/>
    <property type="chains" value="H=1-138"/>
</dbReference>
<dbReference type="PDB" id="4DV6">
    <property type="method" value="X-ray"/>
    <property type="resolution" value="3.30 A"/>
    <property type="chains" value="H=1-138"/>
</dbReference>
<dbReference type="PDB" id="4DV7">
    <property type="method" value="X-ray"/>
    <property type="resolution" value="3.29 A"/>
    <property type="chains" value="H=1-138"/>
</dbReference>
<dbReference type="PDB" id="4GKJ">
    <property type="method" value="X-ray"/>
    <property type="resolution" value="3.30 A"/>
    <property type="chains" value="H=1-138"/>
</dbReference>
<dbReference type="PDB" id="4GKK">
    <property type="method" value="X-ray"/>
    <property type="resolution" value="3.20 A"/>
    <property type="chains" value="H=1-138"/>
</dbReference>
<dbReference type="PDB" id="4JI0">
    <property type="method" value="X-ray"/>
    <property type="resolution" value="3.49 A"/>
    <property type="chains" value="H=1-138"/>
</dbReference>
<dbReference type="PDB" id="4JI1">
    <property type="method" value="X-ray"/>
    <property type="resolution" value="3.14 A"/>
    <property type="chains" value="H=1-138"/>
</dbReference>
<dbReference type="PDB" id="4JI2">
    <property type="method" value="X-ray"/>
    <property type="resolution" value="3.64 A"/>
    <property type="chains" value="H=1-138"/>
</dbReference>
<dbReference type="PDB" id="4JI3">
    <property type="method" value="X-ray"/>
    <property type="resolution" value="3.35 A"/>
    <property type="chains" value="H=1-138"/>
</dbReference>
<dbReference type="PDB" id="4JI4">
    <property type="method" value="X-ray"/>
    <property type="resolution" value="3.69 A"/>
    <property type="chains" value="H=1-138"/>
</dbReference>
<dbReference type="PDB" id="4JI5">
    <property type="method" value="X-ray"/>
    <property type="resolution" value="3.85 A"/>
    <property type="chains" value="H=1-138"/>
</dbReference>
<dbReference type="PDB" id="4JI6">
    <property type="method" value="X-ray"/>
    <property type="resolution" value="3.55 A"/>
    <property type="chains" value="H=1-138"/>
</dbReference>
<dbReference type="PDB" id="4JI7">
    <property type="method" value="X-ray"/>
    <property type="resolution" value="3.50 A"/>
    <property type="chains" value="H=1-138"/>
</dbReference>
<dbReference type="PDB" id="4JI8">
    <property type="method" value="X-ray"/>
    <property type="resolution" value="3.74 A"/>
    <property type="chains" value="H=1-138"/>
</dbReference>
<dbReference type="PDB" id="4JV5">
    <property type="method" value="X-ray"/>
    <property type="resolution" value="3.16 A"/>
    <property type="chains" value="H=1-138"/>
</dbReference>
<dbReference type="PDB" id="4JYA">
    <property type="method" value="X-ray"/>
    <property type="resolution" value="3.10 A"/>
    <property type="chains" value="H=1-138"/>
</dbReference>
<dbReference type="PDB" id="4K0K">
    <property type="method" value="X-ray"/>
    <property type="resolution" value="3.40 A"/>
    <property type="chains" value="H=1-138"/>
</dbReference>
<dbReference type="PDB" id="4KHP">
    <property type="method" value="X-ray"/>
    <property type="resolution" value="3.10 A"/>
    <property type="chains" value="H=1-138"/>
</dbReference>
<dbReference type="PDB" id="4L47">
    <property type="method" value="X-ray"/>
    <property type="resolution" value="3.22 A"/>
    <property type="chains" value="QH/XH=1-138"/>
</dbReference>
<dbReference type="PDB" id="4L71">
    <property type="method" value="X-ray"/>
    <property type="resolution" value="3.90 A"/>
    <property type="chains" value="QH/XH=1-138"/>
</dbReference>
<dbReference type="PDB" id="4LEL">
    <property type="method" value="X-ray"/>
    <property type="resolution" value="3.90 A"/>
    <property type="chains" value="QH/XH=1-138"/>
</dbReference>
<dbReference type="PDB" id="4LF4">
    <property type="method" value="X-ray"/>
    <property type="resolution" value="3.34 A"/>
    <property type="chains" value="H=1-138"/>
</dbReference>
<dbReference type="PDB" id="4LF5">
    <property type="method" value="X-ray"/>
    <property type="resolution" value="3.75 A"/>
    <property type="chains" value="H=1-138"/>
</dbReference>
<dbReference type="PDB" id="4LF6">
    <property type="method" value="X-ray"/>
    <property type="resolution" value="3.31 A"/>
    <property type="chains" value="H=1-138"/>
</dbReference>
<dbReference type="PDB" id="4LF7">
    <property type="method" value="X-ray"/>
    <property type="resolution" value="3.15 A"/>
    <property type="chains" value="H=1-138"/>
</dbReference>
<dbReference type="PDB" id="4LF8">
    <property type="method" value="X-ray"/>
    <property type="resolution" value="3.15 A"/>
    <property type="chains" value="H=1-138"/>
</dbReference>
<dbReference type="PDB" id="4LF9">
    <property type="method" value="X-ray"/>
    <property type="resolution" value="3.28 A"/>
    <property type="chains" value="H=1-138"/>
</dbReference>
<dbReference type="PDB" id="4LFA">
    <property type="method" value="X-ray"/>
    <property type="resolution" value="3.65 A"/>
    <property type="chains" value="H=1-138"/>
</dbReference>
<dbReference type="PDB" id="4LFB">
    <property type="method" value="X-ray"/>
    <property type="resolution" value="3.01 A"/>
    <property type="chains" value="H=1-138"/>
</dbReference>
<dbReference type="PDB" id="4LFC">
    <property type="method" value="X-ray"/>
    <property type="resolution" value="3.60 A"/>
    <property type="chains" value="H=1-138"/>
</dbReference>
<dbReference type="PDB" id="4LFZ">
    <property type="method" value="X-ray"/>
    <property type="resolution" value="3.92 A"/>
    <property type="chains" value="QH/XH=1-138"/>
</dbReference>
<dbReference type="PDB" id="4LNT">
    <property type="method" value="X-ray"/>
    <property type="resolution" value="2.94 A"/>
    <property type="chains" value="QH/XH=1-138"/>
</dbReference>
<dbReference type="PDB" id="4LSK">
    <property type="method" value="X-ray"/>
    <property type="resolution" value="3.48 A"/>
    <property type="chains" value="QH/XH=1-138"/>
</dbReference>
<dbReference type="PDB" id="4LT8">
    <property type="method" value="X-ray"/>
    <property type="resolution" value="3.14 A"/>
    <property type="chains" value="QH/XH=1-138"/>
</dbReference>
<dbReference type="PDB" id="4NXM">
    <property type="method" value="X-ray"/>
    <property type="resolution" value="3.65 A"/>
    <property type="chains" value="H=1-138"/>
</dbReference>
<dbReference type="PDB" id="4NXN">
    <property type="method" value="X-ray"/>
    <property type="resolution" value="3.54 A"/>
    <property type="chains" value="H=1-138"/>
</dbReference>
<dbReference type="PDB" id="4OX9">
    <property type="method" value="X-ray"/>
    <property type="resolution" value="3.80 A"/>
    <property type="chains" value="H=1-138"/>
</dbReference>
<dbReference type="PDB" id="4P6F">
    <property type="method" value="X-ray"/>
    <property type="resolution" value="3.60 A"/>
    <property type="chains" value="QH/XH=1-138"/>
</dbReference>
<dbReference type="PDB" id="4P70">
    <property type="method" value="X-ray"/>
    <property type="resolution" value="3.68 A"/>
    <property type="chains" value="QH/XH=1-138"/>
</dbReference>
<dbReference type="PDB" id="4TUA">
    <property type="method" value="X-ray"/>
    <property type="resolution" value="3.60 A"/>
    <property type="chains" value="QH/XH=1-138"/>
</dbReference>
<dbReference type="PDB" id="4TUB">
    <property type="method" value="X-ray"/>
    <property type="resolution" value="3.60 A"/>
    <property type="chains" value="QH/XH=1-138"/>
</dbReference>
<dbReference type="PDB" id="4TUC">
    <property type="method" value="X-ray"/>
    <property type="resolution" value="3.60 A"/>
    <property type="chains" value="QH/XH=1-138"/>
</dbReference>
<dbReference type="PDB" id="4TUD">
    <property type="method" value="X-ray"/>
    <property type="resolution" value="3.60 A"/>
    <property type="chains" value="QH/XH=1-138"/>
</dbReference>
<dbReference type="PDB" id="4TUE">
    <property type="method" value="X-ray"/>
    <property type="resolution" value="3.50 A"/>
    <property type="chains" value="QH/XH=1-138"/>
</dbReference>
<dbReference type="PDB" id="4V42">
    <property type="method" value="X-ray"/>
    <property type="resolution" value="5.50 A"/>
    <property type="chains" value="AK=1-138"/>
</dbReference>
<dbReference type="PDB" id="4V49">
    <property type="method" value="X-ray"/>
    <property type="resolution" value="8.70 A"/>
    <property type="chains" value="H=1-138"/>
</dbReference>
<dbReference type="PDB" id="4V4A">
    <property type="method" value="X-ray"/>
    <property type="resolution" value="9.50 A"/>
    <property type="chains" value="H=1-138"/>
</dbReference>
<dbReference type="PDB" id="4V4G">
    <property type="method" value="X-ray"/>
    <property type="resolution" value="11.50 A"/>
    <property type="chains" value="H=1-138"/>
</dbReference>
<dbReference type="PDB" id="4V4I">
    <property type="method" value="X-ray"/>
    <property type="resolution" value="3.71 A"/>
    <property type="chains" value="i=-"/>
</dbReference>
<dbReference type="PDB" id="4V4P">
    <property type="method" value="X-ray"/>
    <property type="resolution" value="5.50 A"/>
    <property type="chains" value="BK=1-138"/>
</dbReference>
<dbReference type="PDB" id="4V4R">
    <property type="method" value="X-ray"/>
    <property type="resolution" value="5.90 A"/>
    <property type="chains" value="AH=1-138"/>
</dbReference>
<dbReference type="PDB" id="4V4S">
    <property type="method" value="X-ray"/>
    <property type="resolution" value="6.76 A"/>
    <property type="chains" value="AH=1-138"/>
</dbReference>
<dbReference type="PDB" id="4V4T">
    <property type="method" value="X-ray"/>
    <property type="resolution" value="6.46 A"/>
    <property type="chains" value="AH=1-138"/>
</dbReference>
<dbReference type="PDB" id="4V4X">
    <property type="method" value="X-ray"/>
    <property type="resolution" value="5.00 A"/>
    <property type="chains" value="AK=1-138"/>
</dbReference>
<dbReference type="PDB" id="4V4Y">
    <property type="method" value="X-ray"/>
    <property type="resolution" value="5.50 A"/>
    <property type="chains" value="AK=1-138"/>
</dbReference>
<dbReference type="PDB" id="4V4Z">
    <property type="method" value="X-ray"/>
    <property type="resolution" value="4.51 A"/>
    <property type="chains" value="AK=1-138"/>
</dbReference>
<dbReference type="PDB" id="4V51">
    <property type="method" value="X-ray"/>
    <property type="resolution" value="2.80 A"/>
    <property type="chains" value="AH/CH=1-138"/>
</dbReference>
<dbReference type="PDB" id="4V5A">
    <property type="method" value="X-ray"/>
    <property type="resolution" value="3.50 A"/>
    <property type="chains" value="AH/CH=1-138"/>
</dbReference>
<dbReference type="PDB" id="4V5C">
    <property type="method" value="X-ray"/>
    <property type="resolution" value="3.30 A"/>
    <property type="chains" value="AH/CH=1-138"/>
</dbReference>
<dbReference type="PDB" id="4V5D">
    <property type="method" value="X-ray"/>
    <property type="resolution" value="3.50 A"/>
    <property type="chains" value="AH/CH=1-138"/>
</dbReference>
<dbReference type="PDB" id="4V5E">
    <property type="method" value="X-ray"/>
    <property type="resolution" value="3.45 A"/>
    <property type="chains" value="AH/CH=1-138"/>
</dbReference>
<dbReference type="PDB" id="4V5F">
    <property type="method" value="X-ray"/>
    <property type="resolution" value="3.60 A"/>
    <property type="chains" value="AH/CH=1-138"/>
</dbReference>
<dbReference type="PDB" id="4V5G">
    <property type="method" value="X-ray"/>
    <property type="resolution" value="3.60 A"/>
    <property type="chains" value="AH/CH=1-138"/>
</dbReference>
<dbReference type="PDB" id="4V5J">
    <property type="method" value="X-ray"/>
    <property type="resolution" value="3.10 A"/>
    <property type="chains" value="AH/CH=1-138"/>
</dbReference>
<dbReference type="PDB" id="4V5K">
    <property type="method" value="X-ray"/>
    <property type="resolution" value="3.20 A"/>
    <property type="chains" value="AH/CH=1-138"/>
</dbReference>
<dbReference type="PDB" id="4V5L">
    <property type="method" value="X-ray"/>
    <property type="resolution" value="3.10 A"/>
    <property type="chains" value="AH=1-138"/>
</dbReference>
<dbReference type="PDB" id="4V5M">
    <property type="method" value="EM"/>
    <property type="resolution" value="7.80 A"/>
    <property type="chains" value="AH=1-138"/>
</dbReference>
<dbReference type="PDB" id="4V5N">
    <property type="method" value="EM"/>
    <property type="resolution" value="7.60 A"/>
    <property type="chains" value="AH=1-138"/>
</dbReference>
<dbReference type="PDB" id="4V5P">
    <property type="method" value="X-ray"/>
    <property type="resolution" value="3.10 A"/>
    <property type="chains" value="AH/CH=1-138"/>
</dbReference>
<dbReference type="PDB" id="4V5Q">
    <property type="method" value="X-ray"/>
    <property type="resolution" value="3.10 A"/>
    <property type="chains" value="AH/CH=1-138"/>
</dbReference>
<dbReference type="PDB" id="4V5R">
    <property type="method" value="X-ray"/>
    <property type="resolution" value="3.10 A"/>
    <property type="chains" value="AH/CH=1-138"/>
</dbReference>
<dbReference type="PDB" id="4V5S">
    <property type="method" value="X-ray"/>
    <property type="resolution" value="3.10 A"/>
    <property type="chains" value="AH/CH=1-138"/>
</dbReference>
<dbReference type="PDB" id="4V68">
    <property type="method" value="EM"/>
    <property type="resolution" value="6.40 A"/>
    <property type="chains" value="AH=1-138"/>
</dbReference>
<dbReference type="PDB" id="4V6A">
    <property type="method" value="X-ray"/>
    <property type="resolution" value="3.10 A"/>
    <property type="chains" value="AH/CH=1-138"/>
</dbReference>
<dbReference type="PDB" id="4V6F">
    <property type="method" value="X-ray"/>
    <property type="resolution" value="3.10 A"/>
    <property type="chains" value="BK/CK=1-138"/>
</dbReference>
<dbReference type="PDB" id="4V6G">
    <property type="method" value="X-ray"/>
    <property type="resolution" value="3.50 A"/>
    <property type="chains" value="AK/CK=1-138"/>
</dbReference>
<dbReference type="PDB" id="4V7J">
    <property type="method" value="X-ray"/>
    <property type="resolution" value="3.30 A"/>
    <property type="chains" value="Ah/Bh=1-138"/>
</dbReference>
<dbReference type="PDB" id="4V7K">
    <property type="method" value="X-ray"/>
    <property type="resolution" value="3.60 A"/>
    <property type="chains" value="Ah/Bh=1-138"/>
</dbReference>
<dbReference type="PDB" id="4V7L">
    <property type="method" value="X-ray"/>
    <property type="resolution" value="3.00 A"/>
    <property type="chains" value="AH/CH=1-138"/>
</dbReference>
<dbReference type="PDB" id="4V7M">
    <property type="method" value="X-ray"/>
    <property type="resolution" value="3.45 A"/>
    <property type="chains" value="AH/CH=1-138"/>
</dbReference>
<dbReference type="PDB" id="4V7W">
    <property type="method" value="X-ray"/>
    <property type="resolution" value="3.00 A"/>
    <property type="chains" value="AH/CH=1-138"/>
</dbReference>
<dbReference type="PDB" id="4V7X">
    <property type="method" value="X-ray"/>
    <property type="resolution" value="3.00 A"/>
    <property type="chains" value="AH/CH=1-138"/>
</dbReference>
<dbReference type="PDB" id="4V7Y">
    <property type="method" value="X-ray"/>
    <property type="resolution" value="3.00 A"/>
    <property type="chains" value="AH/CH=1-138"/>
</dbReference>
<dbReference type="PDB" id="4V7Z">
    <property type="method" value="X-ray"/>
    <property type="resolution" value="3.10 A"/>
    <property type="chains" value="AH/CH=1-138"/>
</dbReference>
<dbReference type="PDB" id="4V87">
    <property type="method" value="X-ray"/>
    <property type="resolution" value="3.10 A"/>
    <property type="chains" value="BK/CK=1-138"/>
</dbReference>
<dbReference type="PDB" id="4V8A">
    <property type="method" value="X-ray"/>
    <property type="resolution" value="3.20 A"/>
    <property type="chains" value="CH/DH=1-138"/>
</dbReference>
<dbReference type="PDB" id="4V8B">
    <property type="method" value="X-ray"/>
    <property type="resolution" value="3.00 A"/>
    <property type="chains" value="AK/CK=1-138"/>
</dbReference>
<dbReference type="PDB" id="4V8C">
    <property type="method" value="X-ray"/>
    <property type="resolution" value="3.30 A"/>
    <property type="chains" value="CK/DK=1-138"/>
</dbReference>
<dbReference type="PDB" id="4V8D">
    <property type="method" value="X-ray"/>
    <property type="resolution" value="3.00 A"/>
    <property type="chains" value="AK/CK=1-138"/>
</dbReference>
<dbReference type="PDB" id="4V8E">
    <property type="method" value="X-ray"/>
    <property type="resolution" value="3.30 A"/>
    <property type="chains" value="BK/DK=1-138"/>
</dbReference>
<dbReference type="PDB" id="4V8F">
    <property type="method" value="X-ray"/>
    <property type="resolution" value="3.30 A"/>
    <property type="chains" value="BK/CK=1-138"/>
</dbReference>
<dbReference type="PDB" id="4V8G">
    <property type="method" value="X-ray"/>
    <property type="resolution" value="3.00 A"/>
    <property type="chains" value="AH/CH=1-138"/>
</dbReference>
<dbReference type="PDB" id="4V8H">
    <property type="method" value="X-ray"/>
    <property type="resolution" value="3.10 A"/>
    <property type="chains" value="AH/CH=1-138"/>
</dbReference>
<dbReference type="PDB" id="4V8I">
    <property type="method" value="X-ray"/>
    <property type="resolution" value="2.70 A"/>
    <property type="chains" value="AH/CH=1-138"/>
</dbReference>
<dbReference type="PDB" id="4V8J">
    <property type="method" value="X-ray"/>
    <property type="resolution" value="3.90 A"/>
    <property type="chains" value="AH/CH=1-138"/>
</dbReference>
<dbReference type="PDB" id="4V8N">
    <property type="method" value="X-ray"/>
    <property type="resolution" value="3.10 A"/>
    <property type="chains" value="AH/CH=1-138"/>
</dbReference>
<dbReference type="PDB" id="4V8O">
    <property type="method" value="X-ray"/>
    <property type="resolution" value="3.80 A"/>
    <property type="chains" value="AH=1-138"/>
</dbReference>
<dbReference type="PDB" id="4V8Q">
    <property type="method" value="X-ray"/>
    <property type="resolution" value="3.10 A"/>
    <property type="chains" value="BH=1-138"/>
</dbReference>
<dbReference type="PDB" id="4V8U">
    <property type="method" value="X-ray"/>
    <property type="resolution" value="3.70 A"/>
    <property type="chains" value="AH/CH=1-138"/>
</dbReference>
<dbReference type="PDB" id="4V8X">
    <property type="method" value="X-ray"/>
    <property type="resolution" value="3.35 A"/>
    <property type="chains" value="AH/CH=1-138"/>
</dbReference>
<dbReference type="PDB" id="4V90">
    <property type="method" value="X-ray"/>
    <property type="resolution" value="2.95 A"/>
    <property type="chains" value="AH=1-138"/>
</dbReference>
<dbReference type="PDB" id="4V95">
    <property type="method" value="X-ray"/>
    <property type="resolution" value="3.20 A"/>
    <property type="chains" value="AH/CH=1-138"/>
</dbReference>
<dbReference type="PDB" id="4V97">
    <property type="method" value="X-ray"/>
    <property type="resolution" value="3.52 A"/>
    <property type="chains" value="AH/CH=1-138"/>
</dbReference>
<dbReference type="PDB" id="4V9A">
    <property type="method" value="X-ray"/>
    <property type="resolution" value="3.30 A"/>
    <property type="chains" value="AK/CK=1-138"/>
</dbReference>
<dbReference type="PDB" id="4V9B">
    <property type="method" value="X-ray"/>
    <property type="resolution" value="3.10 A"/>
    <property type="chains" value="AK/CK=1-138"/>
</dbReference>
<dbReference type="PDB" id="4V9H">
    <property type="method" value="X-ray"/>
    <property type="resolution" value="2.86 A"/>
    <property type="chains" value="AH=1-138"/>
</dbReference>
<dbReference type="PDB" id="4V9I">
    <property type="method" value="X-ray"/>
    <property type="resolution" value="3.30 A"/>
    <property type="chains" value="AH/CH=1-138"/>
</dbReference>
<dbReference type="PDB" id="4V9R">
    <property type="method" value="X-ray"/>
    <property type="resolution" value="3.00 A"/>
    <property type="chains" value="AH/CH=1-138"/>
</dbReference>
<dbReference type="PDB" id="4V9S">
    <property type="method" value="X-ray"/>
    <property type="resolution" value="3.10 A"/>
    <property type="chains" value="AH/CH=1-138"/>
</dbReference>
<dbReference type="PDB" id="4W2E">
    <property type="method" value="X-ray"/>
    <property type="resolution" value="2.90 A"/>
    <property type="chains" value="h=1-138"/>
</dbReference>
<dbReference type="PDB" id="4W2F">
    <property type="method" value="X-ray"/>
    <property type="resolution" value="2.40 A"/>
    <property type="chains" value="AH/CH=1-138"/>
</dbReference>
<dbReference type="PDB" id="4W2G">
    <property type="method" value="X-ray"/>
    <property type="resolution" value="2.55 A"/>
    <property type="chains" value="AH/CH=1-138"/>
</dbReference>
<dbReference type="PDB" id="4W2H">
    <property type="method" value="X-ray"/>
    <property type="resolution" value="2.70 A"/>
    <property type="chains" value="AH/CH=1-138"/>
</dbReference>
<dbReference type="PDB" id="4W2I">
    <property type="method" value="X-ray"/>
    <property type="resolution" value="2.70 A"/>
    <property type="chains" value="AH/CH=1-138"/>
</dbReference>
<dbReference type="PDB" id="4W4G">
    <property type="method" value="X-ray"/>
    <property type="resolution" value="3.30 A"/>
    <property type="chains" value="QH/XH=1-138"/>
</dbReference>
<dbReference type="PDB" id="4WPO">
    <property type="method" value="X-ray"/>
    <property type="resolution" value="2.80 A"/>
    <property type="chains" value="BH/DH=1-138"/>
</dbReference>
<dbReference type="PDB" id="4WQ1">
    <property type="method" value="X-ray"/>
    <property type="resolution" value="3.10 A"/>
    <property type="chains" value="72/7E=1-138"/>
</dbReference>
<dbReference type="PDB" id="4WQF">
    <property type="method" value="X-ray"/>
    <property type="resolution" value="2.80 A"/>
    <property type="chains" value="BH/DH=1-138"/>
</dbReference>
<dbReference type="PDB" id="4WQR">
    <property type="method" value="X-ray"/>
    <property type="resolution" value="3.15 A"/>
    <property type="chains" value="72/7E=1-138"/>
</dbReference>
<dbReference type="PDB" id="4WQU">
    <property type="method" value="X-ray"/>
    <property type="resolution" value="2.80 A"/>
    <property type="chains" value="BH/DH=1-138"/>
</dbReference>
<dbReference type="PDB" id="4WQY">
    <property type="method" value="X-ray"/>
    <property type="resolution" value="2.80 A"/>
    <property type="chains" value="BH/DH=1-138"/>
</dbReference>
<dbReference type="PDB" id="4WR6">
    <property type="method" value="X-ray"/>
    <property type="resolution" value="3.05 A"/>
    <property type="chains" value="72/7E=1-138"/>
</dbReference>
<dbReference type="PDB" id="4WRA">
    <property type="method" value="X-ray"/>
    <property type="resolution" value="3.05 A"/>
    <property type="chains" value="72/7E=1-138"/>
</dbReference>
<dbReference type="PDB" id="4WRO">
    <property type="method" value="X-ray"/>
    <property type="resolution" value="3.05 A"/>
    <property type="chains" value="7E=1-138"/>
</dbReference>
<dbReference type="PDB" id="4WSD">
    <property type="method" value="X-ray"/>
    <property type="resolution" value="2.95 A"/>
    <property type="chains" value="72/7E=1-138"/>
</dbReference>
<dbReference type="PDB" id="4WSM">
    <property type="method" value="X-ray"/>
    <property type="resolution" value="3.30 A"/>
    <property type="chains" value="72/7E=1-138"/>
</dbReference>
<dbReference type="PDB" id="4WT1">
    <property type="method" value="X-ray"/>
    <property type="resolution" value="3.05 A"/>
    <property type="chains" value="72/7E=1-138"/>
</dbReference>
<dbReference type="PDB" id="4WT8">
    <property type="method" value="X-ray"/>
    <property type="resolution" value="3.40 A"/>
    <property type="chains" value="AH/BH=1-138"/>
</dbReference>
<dbReference type="PDB" id="4WU1">
    <property type="method" value="X-ray"/>
    <property type="resolution" value="3.20 A"/>
    <property type="chains" value="72/7E=1-138"/>
</dbReference>
<dbReference type="PDB" id="4WZD">
    <property type="method" value="X-ray"/>
    <property type="resolution" value="3.10 A"/>
    <property type="chains" value="72/7E=1-138"/>
</dbReference>
<dbReference type="PDB" id="4WZO">
    <property type="method" value="X-ray"/>
    <property type="resolution" value="3.30 A"/>
    <property type="chains" value="72/7E=1-138"/>
</dbReference>
<dbReference type="PDB" id="4X62">
    <property type="method" value="X-ray"/>
    <property type="resolution" value="3.45 A"/>
    <property type="chains" value="H=1-138"/>
</dbReference>
<dbReference type="PDB" id="4X64">
    <property type="method" value="X-ray"/>
    <property type="resolution" value="3.35 A"/>
    <property type="chains" value="H=1-138"/>
</dbReference>
<dbReference type="PDB" id="4X65">
    <property type="method" value="X-ray"/>
    <property type="resolution" value="3.35 A"/>
    <property type="chains" value="H=1-138"/>
</dbReference>
<dbReference type="PDB" id="4X66">
    <property type="method" value="X-ray"/>
    <property type="resolution" value="3.45 A"/>
    <property type="chains" value="H=1-138"/>
</dbReference>
<dbReference type="PDB" id="4Y4O">
    <property type="method" value="X-ray"/>
    <property type="resolution" value="2.30 A"/>
    <property type="chains" value="1h/2h=1-138"/>
</dbReference>
<dbReference type="PDB" id="4Y4P">
    <property type="method" value="X-ray"/>
    <property type="resolution" value="2.50 A"/>
    <property type="chains" value="1h/2h=1-138"/>
</dbReference>
<dbReference type="PDB" id="4YHH">
    <property type="method" value="X-ray"/>
    <property type="resolution" value="3.42 A"/>
    <property type="chains" value="H=1-138"/>
</dbReference>
<dbReference type="PDB" id="4YPB">
    <property type="method" value="X-ray"/>
    <property type="resolution" value="3.40 A"/>
    <property type="chains" value="QH/XH=1-138"/>
</dbReference>
<dbReference type="PDB" id="4YY3">
    <property type="method" value="X-ray"/>
    <property type="resolution" value="3.60 A"/>
    <property type="chains" value="H=1-138"/>
</dbReference>
<dbReference type="PDB" id="4YZV">
    <property type="method" value="X-ray"/>
    <property type="resolution" value="3.10 A"/>
    <property type="chains" value="QH/XH=1-138"/>
</dbReference>
<dbReference type="PDB" id="4Z3S">
    <property type="method" value="X-ray"/>
    <property type="resolution" value="2.65 A"/>
    <property type="chains" value="1h/2h=1-138"/>
</dbReference>
<dbReference type="PDB" id="4Z8C">
    <property type="method" value="X-ray"/>
    <property type="resolution" value="2.90 A"/>
    <property type="chains" value="1h/2h=1-138"/>
</dbReference>
<dbReference type="PDB" id="4ZER">
    <property type="method" value="X-ray"/>
    <property type="resolution" value="3.10 A"/>
    <property type="chains" value="1h/2h=2-138"/>
</dbReference>
<dbReference type="PDB" id="4ZSN">
    <property type="method" value="X-ray"/>
    <property type="resolution" value="3.60 A"/>
    <property type="chains" value="QH/XH=1-138"/>
</dbReference>
<dbReference type="PDB" id="5A9Z">
    <property type="method" value="EM"/>
    <property type="resolution" value="4.70 A"/>
    <property type="chains" value="BL=1-138"/>
</dbReference>
<dbReference type="PDB" id="5AA0">
    <property type="method" value="EM"/>
    <property type="resolution" value="5.00 A"/>
    <property type="chains" value="BL=1-138"/>
</dbReference>
<dbReference type="PDB" id="5BR8">
    <property type="method" value="X-ray"/>
    <property type="resolution" value="3.40 A"/>
    <property type="chains" value="H=1-138"/>
</dbReference>
<dbReference type="PDB" id="5CZP">
    <property type="method" value="X-ray"/>
    <property type="resolution" value="3.30 A"/>
    <property type="chains" value="QH/XH=1-138"/>
</dbReference>
<dbReference type="PDB" id="5D8B">
    <property type="method" value="X-ray"/>
    <property type="resolution" value="3.63 A"/>
    <property type="chains" value="EC/IA=1-138"/>
</dbReference>
<dbReference type="PDB" id="5DFE">
    <property type="method" value="X-ray"/>
    <property type="resolution" value="3.10 A"/>
    <property type="chains" value="QH/XH=1-138"/>
</dbReference>
<dbReference type="PDB" id="5DOX">
    <property type="method" value="X-ray"/>
    <property type="resolution" value="3.10 A"/>
    <property type="chains" value="1h/2h=1-138"/>
</dbReference>
<dbReference type="PDB" id="5DOY">
    <property type="method" value="X-ray"/>
    <property type="resolution" value="2.60 A"/>
    <property type="chains" value="1h/2h=1-138"/>
</dbReference>
<dbReference type="PDB" id="5E7K">
    <property type="method" value="X-ray"/>
    <property type="resolution" value="3.20 A"/>
    <property type="chains" value="72/7E=1-138"/>
</dbReference>
<dbReference type="PDB" id="5E81">
    <property type="method" value="X-ray"/>
    <property type="resolution" value="2.95 A"/>
    <property type="chains" value="72/7E=1-138"/>
</dbReference>
<dbReference type="PDB" id="5EL4">
    <property type="method" value="X-ray"/>
    <property type="resolution" value="3.15 A"/>
    <property type="chains" value="72/7E=1-138"/>
</dbReference>
<dbReference type="PDB" id="5EL5">
    <property type="method" value="X-ray"/>
    <property type="resolution" value="3.15 A"/>
    <property type="chains" value="72/7E=1-138"/>
</dbReference>
<dbReference type="PDB" id="5EL6">
    <property type="method" value="X-ray"/>
    <property type="resolution" value="3.10 A"/>
    <property type="chains" value="72/7E=1-138"/>
</dbReference>
<dbReference type="PDB" id="5EL7">
    <property type="method" value="X-ray"/>
    <property type="resolution" value="3.15 A"/>
    <property type="chains" value="72/7E=1-138"/>
</dbReference>
<dbReference type="PDB" id="5F8K">
    <property type="method" value="X-ray"/>
    <property type="resolution" value="2.80 A"/>
    <property type="chains" value="1h/2h=2-138"/>
</dbReference>
<dbReference type="PDB" id="5FDU">
    <property type="method" value="X-ray"/>
    <property type="resolution" value="2.90 A"/>
    <property type="chains" value="1h/2h=2-138"/>
</dbReference>
<dbReference type="PDB" id="5FDV">
    <property type="method" value="X-ray"/>
    <property type="resolution" value="2.80 A"/>
    <property type="chains" value="1h/2h=2-138"/>
</dbReference>
<dbReference type="PDB" id="5HAU">
    <property type="method" value="X-ray"/>
    <property type="resolution" value="3.00 A"/>
    <property type="chains" value="1h/2h=1-138"/>
</dbReference>
<dbReference type="PDB" id="5HCP">
    <property type="method" value="X-ray"/>
    <property type="resolution" value="2.89 A"/>
    <property type="chains" value="1h/2h=1-138"/>
</dbReference>
<dbReference type="PDB" id="5HCQ">
    <property type="method" value="X-ray"/>
    <property type="resolution" value="2.80 A"/>
    <property type="chains" value="1h/2h=1-138"/>
</dbReference>
<dbReference type="PDB" id="5HCR">
    <property type="method" value="X-ray"/>
    <property type="resolution" value="2.80 A"/>
    <property type="chains" value="1h/2h=1-138"/>
</dbReference>
<dbReference type="PDB" id="5HD1">
    <property type="method" value="X-ray"/>
    <property type="resolution" value="2.70 A"/>
    <property type="chains" value="1h/2h=1-138"/>
</dbReference>
<dbReference type="PDB" id="5IB7">
    <property type="method" value="X-ray"/>
    <property type="resolution" value="2.99 A"/>
    <property type="chains" value="72/7E=1-138"/>
</dbReference>
<dbReference type="PDB" id="5IB8">
    <property type="method" value="X-ray"/>
    <property type="resolution" value="3.13 A"/>
    <property type="chains" value="72/7E=1-138"/>
</dbReference>
<dbReference type="PDB" id="5IBB">
    <property type="method" value="X-ray"/>
    <property type="resolution" value="2.96 A"/>
    <property type="chains" value="72/7E=1-138"/>
</dbReference>
<dbReference type="PDB" id="5IMQ">
    <property type="method" value="EM"/>
    <property type="resolution" value="3.80 A"/>
    <property type="chains" value="L=1-138"/>
</dbReference>
<dbReference type="PDB" id="5IMR">
    <property type="method" value="EM"/>
    <property type="chains" value="L=1-138"/>
</dbReference>
<dbReference type="PDB" id="5IWA">
    <property type="method" value="X-ray"/>
    <property type="resolution" value="3.50 A"/>
    <property type="chains" value="H=1-138"/>
</dbReference>
<dbReference type="PDB" id="5J30">
    <property type="method" value="X-ray"/>
    <property type="resolution" value="3.20 A"/>
    <property type="chains" value="QH/XH=1-138"/>
</dbReference>
<dbReference type="PDB" id="5J3C">
    <property type="method" value="X-ray"/>
    <property type="resolution" value="3.04 A"/>
    <property type="chains" value="QH/XH=1-138"/>
</dbReference>
<dbReference type="PDB" id="5J4B">
    <property type="method" value="X-ray"/>
    <property type="resolution" value="2.60 A"/>
    <property type="chains" value="1h/2h=1-138"/>
</dbReference>
<dbReference type="PDB" id="5J4C">
    <property type="method" value="X-ray"/>
    <property type="resolution" value="2.80 A"/>
    <property type="chains" value="1h/2h=1-138"/>
</dbReference>
<dbReference type="PDB" id="5J8B">
    <property type="method" value="X-ray"/>
    <property type="resolution" value="2.60 A"/>
    <property type="chains" value="h=1-138"/>
</dbReference>
<dbReference type="PDB" id="5LMN">
    <property type="method" value="EM"/>
    <property type="resolution" value="3.55 A"/>
    <property type="chains" value="H=1-138"/>
</dbReference>
<dbReference type="PDB" id="5LMO">
    <property type="method" value="EM"/>
    <property type="resolution" value="4.30 A"/>
    <property type="chains" value="H=1-138"/>
</dbReference>
<dbReference type="PDB" id="5LMP">
    <property type="method" value="EM"/>
    <property type="resolution" value="5.35 A"/>
    <property type="chains" value="H=1-138"/>
</dbReference>
<dbReference type="PDB" id="5LMQ">
    <property type="method" value="EM"/>
    <property type="resolution" value="4.20 A"/>
    <property type="chains" value="H=1-138"/>
</dbReference>
<dbReference type="PDB" id="5LMR">
    <property type="method" value="EM"/>
    <property type="resolution" value="4.45 A"/>
    <property type="chains" value="H=1-138"/>
</dbReference>
<dbReference type="PDB" id="5LMS">
    <property type="method" value="EM"/>
    <property type="resolution" value="5.10 A"/>
    <property type="chains" value="H=1-138"/>
</dbReference>
<dbReference type="PDB" id="5LMT">
    <property type="method" value="EM"/>
    <property type="resolution" value="4.15 A"/>
    <property type="chains" value="H=1-138"/>
</dbReference>
<dbReference type="PDB" id="5LMU">
    <property type="method" value="EM"/>
    <property type="resolution" value="4.00 A"/>
    <property type="chains" value="H=1-138"/>
</dbReference>
<dbReference type="PDB" id="5LMV">
    <property type="method" value="EM"/>
    <property type="resolution" value="4.90 A"/>
    <property type="chains" value="H=1-138"/>
</dbReference>
<dbReference type="PDB" id="5NDJ">
    <property type="method" value="X-ray"/>
    <property type="resolution" value="3.15 A"/>
    <property type="chains" value="72/7E=1-138"/>
</dbReference>
<dbReference type="PDB" id="5NDK">
    <property type="method" value="X-ray"/>
    <property type="resolution" value="2.95 A"/>
    <property type="chains" value="72/7E=1-138"/>
</dbReference>
<dbReference type="PDB" id="5OT7">
    <property type="method" value="EM"/>
    <property type="resolution" value="3.80 A"/>
    <property type="chains" value="G=1-138"/>
</dbReference>
<dbReference type="PDB" id="5UQ7">
    <property type="method" value="EM"/>
    <property type="resolution" value="3.50 A"/>
    <property type="chains" value="h=2-138"/>
</dbReference>
<dbReference type="PDB" id="5UQ8">
    <property type="method" value="EM"/>
    <property type="resolution" value="3.20 A"/>
    <property type="chains" value="h=2-138"/>
</dbReference>
<dbReference type="PDB" id="5VP2">
    <property type="method" value="X-ray"/>
    <property type="resolution" value="2.80 A"/>
    <property type="chains" value="1h/2h=1-138"/>
</dbReference>
<dbReference type="PDB" id="5VPO">
    <property type="method" value="X-ray"/>
    <property type="resolution" value="3.34 A"/>
    <property type="chains" value="QH/XH=1-138"/>
</dbReference>
<dbReference type="PDB" id="5VPP">
    <property type="method" value="X-ray"/>
    <property type="resolution" value="3.90 A"/>
    <property type="chains" value="QH/XH=1-138"/>
</dbReference>
<dbReference type="PDB" id="5W4K">
    <property type="method" value="X-ray"/>
    <property type="resolution" value="2.70 A"/>
    <property type="chains" value="1h/2h=1-138"/>
</dbReference>
<dbReference type="PDB" id="5WIS">
    <property type="method" value="X-ray"/>
    <property type="resolution" value="2.70 A"/>
    <property type="chains" value="1h/2h=1-138"/>
</dbReference>
<dbReference type="PDB" id="5WIT">
    <property type="method" value="X-ray"/>
    <property type="resolution" value="2.60 A"/>
    <property type="chains" value="1h/2h=1-138"/>
</dbReference>
<dbReference type="PDB" id="5WNP">
    <property type="method" value="X-ray"/>
    <property type="resolution" value="3.30 A"/>
    <property type="chains" value="H=1-138"/>
</dbReference>
<dbReference type="PDB" id="5WNQ">
    <property type="method" value="X-ray"/>
    <property type="resolution" value="3.50 A"/>
    <property type="chains" value="H=1-138"/>
</dbReference>
<dbReference type="PDB" id="5WNR">
    <property type="method" value="X-ray"/>
    <property type="resolution" value="3.50 A"/>
    <property type="chains" value="H=1-138"/>
</dbReference>
<dbReference type="PDB" id="5WNS">
    <property type="method" value="X-ray"/>
    <property type="resolution" value="3.50 A"/>
    <property type="chains" value="H=1-138"/>
</dbReference>
<dbReference type="PDB" id="5WNT">
    <property type="method" value="X-ray"/>
    <property type="resolution" value="3.30 A"/>
    <property type="chains" value="H=1-138"/>
</dbReference>
<dbReference type="PDB" id="5WNU">
    <property type="method" value="X-ray"/>
    <property type="resolution" value="3.40 A"/>
    <property type="chains" value="H=1-138"/>
</dbReference>
<dbReference type="PDB" id="5WNV">
    <property type="method" value="X-ray"/>
    <property type="resolution" value="3.30 A"/>
    <property type="chains" value="H=1-138"/>
</dbReference>
<dbReference type="PDB" id="5ZLU">
    <property type="method" value="EM"/>
    <property type="resolution" value="3.60 A"/>
    <property type="chains" value="N=1-138"/>
</dbReference>
<dbReference type="PDB" id="6BUW">
    <property type="method" value="X-ray"/>
    <property type="resolution" value="3.50 A"/>
    <property type="chains" value="QH/XH=1-138"/>
</dbReference>
<dbReference type="PDB" id="6BZ6">
    <property type="method" value="X-ray"/>
    <property type="resolution" value="3.18 A"/>
    <property type="chains" value="QH/XH=1-138"/>
</dbReference>
<dbReference type="PDB" id="6BZ7">
    <property type="method" value="X-ray"/>
    <property type="resolution" value="3.68 A"/>
    <property type="chains" value="QH/XH=1-138"/>
</dbReference>
<dbReference type="PDB" id="6BZ8">
    <property type="method" value="X-ray"/>
    <property type="resolution" value="3.74 A"/>
    <property type="chains" value="QH/XH=1-138"/>
</dbReference>
<dbReference type="PDB" id="6C5L">
    <property type="method" value="X-ray"/>
    <property type="resolution" value="3.20 A"/>
    <property type="chains" value="AH/CH=1-138"/>
</dbReference>
<dbReference type="PDB" id="6CAE">
    <property type="method" value="X-ray"/>
    <property type="resolution" value="2.60 A"/>
    <property type="chains" value="1h/2h=1-138"/>
</dbReference>
<dbReference type="PDB" id="6CAO">
    <property type="method" value="X-ray"/>
    <property type="resolution" value="3.45 A"/>
    <property type="chains" value="H=1-138"/>
</dbReference>
<dbReference type="PDB" id="6CAP">
    <property type="method" value="X-ray"/>
    <property type="resolution" value="3.40 A"/>
    <property type="chains" value="H=1-138"/>
</dbReference>
<dbReference type="PDB" id="6CAQ">
    <property type="method" value="X-ray"/>
    <property type="resolution" value="3.40 A"/>
    <property type="chains" value="H=1-138"/>
</dbReference>
<dbReference type="PDB" id="6CAR">
    <property type="method" value="X-ray"/>
    <property type="resolution" value="3.40 A"/>
    <property type="chains" value="H=1-138"/>
</dbReference>
<dbReference type="PDB" id="6CAS">
    <property type="method" value="X-ray"/>
    <property type="resolution" value="3.50 A"/>
    <property type="chains" value="H=1-138"/>
</dbReference>
<dbReference type="PDB" id="6CFJ">
    <property type="method" value="X-ray"/>
    <property type="resolution" value="2.80 A"/>
    <property type="chains" value="1h/2h=1-138"/>
</dbReference>
<dbReference type="PDB" id="6CFK">
    <property type="method" value="X-ray"/>
    <property type="resolution" value="2.70 A"/>
    <property type="chains" value="1h/2h=1-138"/>
</dbReference>
<dbReference type="PDB" id="6CFL">
    <property type="method" value="X-ray"/>
    <property type="resolution" value="2.60 A"/>
    <property type="chains" value="1h/2h=1-138"/>
</dbReference>
<dbReference type="PDB" id="6CZR">
    <property type="method" value="X-ray"/>
    <property type="resolution" value="3.14 A"/>
    <property type="chains" value="1h/2h=2-138"/>
</dbReference>
<dbReference type="PDB" id="6DTI">
    <property type="method" value="X-ray"/>
    <property type="resolution" value="3.54 A"/>
    <property type="chains" value="H=1-138"/>
</dbReference>
<dbReference type="PDB" id="6FKR">
    <property type="method" value="X-ray"/>
    <property type="resolution" value="3.20 A"/>
    <property type="chains" value="1h/2h=2-138"/>
</dbReference>
<dbReference type="PDB" id="6GSJ">
    <property type="method" value="X-ray"/>
    <property type="resolution" value="2.96 A"/>
    <property type="chains" value="72/7E=1-138"/>
</dbReference>
<dbReference type="PDB" id="6GSK">
    <property type="method" value="X-ray"/>
    <property type="resolution" value="3.36 A"/>
    <property type="chains" value="72/7E=1-138"/>
</dbReference>
<dbReference type="PDB" id="6GSL">
    <property type="method" value="X-ray"/>
    <property type="resolution" value="3.16 A"/>
    <property type="chains" value="72/7E=1-138"/>
</dbReference>
<dbReference type="PDB" id="6GZQ">
    <property type="method" value="EM"/>
    <property type="resolution" value="3.28 A"/>
    <property type="chains" value="H2=1-138"/>
</dbReference>
<dbReference type="PDB" id="6GZX">
    <property type="method" value="EM"/>
    <property type="resolution" value="4.57 A"/>
    <property type="chains" value="H3/H4=1-138"/>
</dbReference>
<dbReference type="PDB" id="6GZZ">
    <property type="method" value="EM"/>
    <property type="resolution" value="4.13 A"/>
    <property type="chains" value="H3/H4=1-138"/>
</dbReference>
<dbReference type="PDB" id="6MKN">
    <property type="method" value="X-ray"/>
    <property type="resolution" value="3.46 A"/>
    <property type="chains" value="H=1-138"/>
</dbReference>
<dbReference type="PDB" id="6MPF">
    <property type="method" value="X-ray"/>
    <property type="resolution" value="3.33 A"/>
    <property type="chains" value="H=1-138"/>
</dbReference>
<dbReference type="PDB" id="6MPI">
    <property type="method" value="X-ray"/>
    <property type="resolution" value="3.33 A"/>
    <property type="chains" value="H=1-138"/>
</dbReference>
<dbReference type="PDB" id="6N9E">
    <property type="method" value="X-ray"/>
    <property type="resolution" value="3.70 A"/>
    <property type="chains" value="1h/2h=1-138"/>
</dbReference>
<dbReference type="PDB" id="6N9F">
    <property type="method" value="X-ray"/>
    <property type="resolution" value="3.70 A"/>
    <property type="chains" value="1h/2h=1-138"/>
</dbReference>
<dbReference type="PDB" id="6ND5">
    <property type="method" value="X-ray"/>
    <property type="resolution" value="2.60 A"/>
    <property type="chains" value="1h/2h=1-138"/>
</dbReference>
<dbReference type="PDB" id="6ND6">
    <property type="method" value="X-ray"/>
    <property type="resolution" value="2.85 A"/>
    <property type="chains" value="1h/2h=1-138"/>
</dbReference>
<dbReference type="PDB" id="6NDK">
    <property type="method" value="X-ray"/>
    <property type="resolution" value="3.64 A"/>
    <property type="chains" value="QH/XH=1-138"/>
</dbReference>
<dbReference type="PDB" id="6NSH">
    <property type="method" value="X-ray"/>
    <property type="resolution" value="3.40 A"/>
    <property type="chains" value="QH/XH=1-138"/>
</dbReference>
<dbReference type="PDB" id="6NTA">
    <property type="method" value="X-ray"/>
    <property type="resolution" value="3.10 A"/>
    <property type="chains" value="QH/XH=1-138"/>
</dbReference>
<dbReference type="PDB" id="6NUO">
    <property type="method" value="X-ray"/>
    <property type="resolution" value="3.20 A"/>
    <property type="chains" value="QH/XH=1-138"/>
</dbReference>
<dbReference type="PDB" id="6NWY">
    <property type="method" value="X-ray"/>
    <property type="resolution" value="3.50 A"/>
    <property type="chains" value="QH/XH=1-138"/>
</dbReference>
<dbReference type="PDB" id="6NY6">
    <property type="method" value="X-ray"/>
    <property type="resolution" value="3.74 A"/>
    <property type="chains" value="H=1-138"/>
</dbReference>
<dbReference type="PDB" id="6O3M">
    <property type="method" value="X-ray"/>
    <property type="resolution" value="3.97 A"/>
    <property type="chains" value="QH/XH=1-138"/>
</dbReference>
<dbReference type="PDB" id="6O97">
    <property type="method" value="X-ray"/>
    <property type="resolution" value="2.75 A"/>
    <property type="chains" value="1h/2h=1-138"/>
</dbReference>
<dbReference type="PDB" id="6OF1">
    <property type="method" value="X-ray"/>
    <property type="resolution" value="2.80 A"/>
    <property type="chains" value="1h/2h=1-138"/>
</dbReference>
<dbReference type="PDB" id="6OF6">
    <property type="method" value="X-ray"/>
    <property type="resolution" value="3.20 A"/>
    <property type="chains" value="QH/XH=1-138"/>
</dbReference>
<dbReference type="PDB" id="6OJ2">
    <property type="method" value="X-ray"/>
    <property type="resolution" value="3.20 A"/>
    <property type="chains" value="QH/XH=1-138"/>
</dbReference>
<dbReference type="PDB" id="6OPE">
    <property type="method" value="X-ray"/>
    <property type="resolution" value="3.10 A"/>
    <property type="chains" value="QH/XH=1-138"/>
</dbReference>
<dbReference type="PDB" id="6ORD">
    <property type="method" value="X-ray"/>
    <property type="resolution" value="3.10 A"/>
    <property type="chains" value="QH/XH=1-138"/>
</dbReference>
<dbReference type="PDB" id="6OSI">
    <property type="method" value="X-ray"/>
    <property type="resolution" value="4.14 A"/>
    <property type="chains" value="QH/XH=1-138"/>
</dbReference>
<dbReference type="PDB" id="6OTR">
    <property type="method" value="X-ray"/>
    <property type="resolution" value="3.12 A"/>
    <property type="chains" value="QH/XH=1-138"/>
</dbReference>
<dbReference type="PDB" id="6OXA">
    <property type="method" value="X-ray"/>
    <property type="resolution" value="3.25 A"/>
    <property type="chains" value="QH/XH=1-138"/>
</dbReference>
<dbReference type="PDB" id="6OXI">
    <property type="method" value="X-ray"/>
    <property type="resolution" value="3.50 A"/>
    <property type="chains" value="QH/XH=1-138"/>
</dbReference>
<dbReference type="PDB" id="6Q95">
    <property type="method" value="EM"/>
    <property type="resolution" value="3.70 A"/>
    <property type="chains" value="m=1-138"/>
</dbReference>
<dbReference type="PDB" id="6QNQ">
    <property type="method" value="X-ray"/>
    <property type="resolution" value="3.50 A"/>
    <property type="chains" value="72/7E=1-138"/>
</dbReference>
<dbReference type="PDB" id="6QNR">
    <property type="method" value="X-ray"/>
    <property type="resolution" value="3.10 A"/>
    <property type="chains" value="72/7E=1-138"/>
</dbReference>
<dbReference type="PDB" id="6UCQ">
    <property type="method" value="X-ray"/>
    <property type="resolution" value="3.50 A"/>
    <property type="chains" value="1h/2h=1-138"/>
</dbReference>
<dbReference type="PDB" id="6UO1">
    <property type="method" value="X-ray"/>
    <property type="resolution" value="2.95 A"/>
    <property type="chains" value="1h/2h=1-138"/>
</dbReference>
<dbReference type="PDB" id="6XHV">
    <property type="method" value="X-ray"/>
    <property type="resolution" value="2.40 A"/>
    <property type="chains" value="1h/2h=1-138"/>
</dbReference>
<dbReference type="PDB" id="6XHW">
    <property type="method" value="X-ray"/>
    <property type="resolution" value="2.50 A"/>
    <property type="chains" value="1h/2h=1-138"/>
</dbReference>
<dbReference type="PDB" id="6XHX">
    <property type="method" value="X-ray"/>
    <property type="resolution" value="2.55 A"/>
    <property type="chains" value="1h/2h=1-138"/>
</dbReference>
<dbReference type="PDB" id="6XHY">
    <property type="method" value="X-ray"/>
    <property type="resolution" value="2.60 A"/>
    <property type="chains" value="1h/2h=1-138"/>
</dbReference>
<dbReference type="PDB" id="6XQD">
    <property type="method" value="X-ray"/>
    <property type="resolution" value="2.80 A"/>
    <property type="chains" value="1h/2h=1-138"/>
</dbReference>
<dbReference type="PDB" id="6XQE">
    <property type="method" value="X-ray"/>
    <property type="resolution" value="3.00 A"/>
    <property type="chains" value="1h/2h=1-138"/>
</dbReference>
<dbReference type="PDB" id="7AZO">
    <property type="method" value="X-ray"/>
    <property type="resolution" value="3.30 A"/>
    <property type="chains" value="S8A/S8B=1-138"/>
</dbReference>
<dbReference type="PDB" id="7AZS">
    <property type="method" value="X-ray"/>
    <property type="resolution" value="3.10 A"/>
    <property type="chains" value="S8A/S8B=1-138"/>
</dbReference>
<dbReference type="PDB" id="7DUG">
    <property type="method" value="X-ray"/>
    <property type="resolution" value="3.75 A"/>
    <property type="chains" value="H=1-138"/>
</dbReference>
<dbReference type="PDB" id="7DUH">
    <property type="method" value="X-ray"/>
    <property type="resolution" value="3.75 A"/>
    <property type="chains" value="H=1-138"/>
</dbReference>
<dbReference type="PDB" id="7DUI">
    <property type="method" value="X-ray"/>
    <property type="resolution" value="3.62 A"/>
    <property type="chains" value="H=1-138"/>
</dbReference>
<dbReference type="PDB" id="7DUJ">
    <property type="method" value="X-ray"/>
    <property type="resolution" value="3.75 A"/>
    <property type="chains" value="H=1-138"/>
</dbReference>
<dbReference type="PDB" id="7DUK">
    <property type="method" value="X-ray"/>
    <property type="resolution" value="3.60 A"/>
    <property type="chains" value="H=1-138"/>
</dbReference>
<dbReference type="PDB" id="7DUL">
    <property type="method" value="X-ray"/>
    <property type="resolution" value="3.62 A"/>
    <property type="chains" value="H=1-138"/>
</dbReference>
<dbReference type="PDB" id="7JQL">
    <property type="method" value="X-ray"/>
    <property type="resolution" value="3.00 A"/>
    <property type="chains" value="1h/2h=1-138"/>
</dbReference>
<dbReference type="PDB" id="7JQM">
    <property type="method" value="X-ray"/>
    <property type="resolution" value="3.05 A"/>
    <property type="chains" value="1h/2h=1-138"/>
</dbReference>
<dbReference type="PDB" id="7LH5">
    <property type="method" value="X-ray"/>
    <property type="resolution" value="3.27 A"/>
    <property type="chains" value="AH/CH=1-138"/>
</dbReference>
<dbReference type="PDB" id="7MD7">
    <property type="method" value="X-ray"/>
    <property type="resolution" value="2.80 A"/>
    <property type="chains" value="1h/2h=1-138"/>
</dbReference>
<dbReference type="PDB" id="7RQ8">
    <property type="method" value="X-ray"/>
    <property type="resolution" value="2.50 A"/>
    <property type="chains" value="1h/2h=1-138"/>
</dbReference>
<dbReference type="PDB" id="7RQ9">
    <property type="method" value="X-ray"/>
    <property type="resolution" value="2.60 A"/>
    <property type="chains" value="1h/2h=1-138"/>
</dbReference>
<dbReference type="PDB" id="7RQA">
    <property type="method" value="X-ray"/>
    <property type="resolution" value="2.40 A"/>
    <property type="chains" value="1h/2h=1-138"/>
</dbReference>
<dbReference type="PDB" id="7RQB">
    <property type="method" value="X-ray"/>
    <property type="resolution" value="2.45 A"/>
    <property type="chains" value="1h/2h=1-138"/>
</dbReference>
<dbReference type="PDB" id="7RQC">
    <property type="method" value="X-ray"/>
    <property type="resolution" value="2.50 A"/>
    <property type="chains" value="1h/2h=1-138"/>
</dbReference>
<dbReference type="PDB" id="7RQD">
    <property type="method" value="X-ray"/>
    <property type="resolution" value="2.50 A"/>
    <property type="chains" value="1h/2h=1-138"/>
</dbReference>
<dbReference type="PDB" id="7RQE">
    <property type="method" value="X-ray"/>
    <property type="resolution" value="2.40 A"/>
    <property type="chains" value="1h/2h=1-138"/>
</dbReference>
<dbReference type="PDB" id="7U2H">
    <property type="method" value="X-ray"/>
    <property type="resolution" value="2.55 A"/>
    <property type="chains" value="1h/2h=1-138"/>
</dbReference>
<dbReference type="PDB" id="7U2I">
    <property type="method" value="X-ray"/>
    <property type="resolution" value="2.55 A"/>
    <property type="chains" value="1h/2h=1-138"/>
</dbReference>
<dbReference type="PDB" id="7U2J">
    <property type="method" value="X-ray"/>
    <property type="resolution" value="2.55 A"/>
    <property type="chains" value="1h/2h=1-138"/>
</dbReference>
<dbReference type="PDB" id="7V2L">
    <property type="method" value="EM"/>
    <property type="resolution" value="3.30 A"/>
    <property type="chains" value="H=1-138"/>
</dbReference>
<dbReference type="PDB" id="7V2M">
    <property type="method" value="EM"/>
    <property type="resolution" value="3.40 A"/>
    <property type="chains" value="H=1-138"/>
</dbReference>
<dbReference type="PDB" id="7V2N">
    <property type="method" value="EM"/>
    <property type="resolution" value="3.60 A"/>
    <property type="chains" value="H=1-138"/>
</dbReference>
<dbReference type="PDB" id="7V2O">
    <property type="method" value="EM"/>
    <property type="resolution" value="3.50 A"/>
    <property type="chains" value="H=1-138"/>
</dbReference>
<dbReference type="PDB" id="7V2P">
    <property type="method" value="EM"/>
    <property type="resolution" value="3.30 A"/>
    <property type="chains" value="H=1-138"/>
</dbReference>
<dbReference type="PDB" id="7V2Q">
    <property type="method" value="EM"/>
    <property type="resolution" value="3.24 A"/>
    <property type="chains" value="H=1-138"/>
</dbReference>
<dbReference type="PDB" id="8CVJ">
    <property type="method" value="X-ray"/>
    <property type="resolution" value="2.40 A"/>
    <property type="chains" value="1h/2h=1-138"/>
</dbReference>
<dbReference type="PDB" id="8CVK">
    <property type="method" value="X-ray"/>
    <property type="resolution" value="2.50 A"/>
    <property type="chains" value="1h/2h=1-138"/>
</dbReference>
<dbReference type="PDB" id="8CVL">
    <property type="method" value="X-ray"/>
    <property type="resolution" value="2.30 A"/>
    <property type="chains" value="1h/2h=1-138"/>
</dbReference>
<dbReference type="PDB" id="8EKB">
    <property type="method" value="X-ray"/>
    <property type="resolution" value="2.70 A"/>
    <property type="chains" value="1h/2h=1-138"/>
</dbReference>
<dbReference type="PDB" id="8EV6">
    <property type="method" value="X-ray"/>
    <property type="resolution" value="2.95 A"/>
    <property type="chains" value="1h/2h=1-138"/>
</dbReference>
<dbReference type="PDB" id="8EV7">
    <property type="method" value="X-ray"/>
    <property type="resolution" value="2.89 A"/>
    <property type="chains" value="1h/2h=1-138"/>
</dbReference>
<dbReference type="PDB" id="8FC1">
    <property type="method" value="X-ray"/>
    <property type="resolution" value="2.50 A"/>
    <property type="chains" value="1h/2h=1-138"/>
</dbReference>
<dbReference type="PDB" id="8FC2">
    <property type="method" value="X-ray"/>
    <property type="resolution" value="2.50 A"/>
    <property type="chains" value="1h/2h=1-138"/>
</dbReference>
<dbReference type="PDB" id="8FC3">
    <property type="method" value="X-ray"/>
    <property type="resolution" value="2.60 A"/>
    <property type="chains" value="1h/2h=1-138"/>
</dbReference>
<dbReference type="PDB" id="8FC4">
    <property type="method" value="X-ray"/>
    <property type="resolution" value="2.45 A"/>
    <property type="chains" value="1h/2h=1-138"/>
</dbReference>
<dbReference type="PDB" id="8FC5">
    <property type="method" value="X-ray"/>
    <property type="resolution" value="2.65 A"/>
    <property type="chains" value="1h/2h=1-138"/>
</dbReference>
<dbReference type="PDB" id="8FC6">
    <property type="method" value="X-ray"/>
    <property type="resolution" value="2.35 A"/>
    <property type="chains" value="1h/2h=1-138"/>
</dbReference>
<dbReference type="PDB" id="8FOM">
    <property type="method" value="X-ray"/>
    <property type="resolution" value="3.58 A"/>
    <property type="chains" value="QH/XH=1-138"/>
</dbReference>
<dbReference type="PDB" id="8FON">
    <property type="method" value="X-ray"/>
    <property type="resolution" value="3.64 A"/>
    <property type="chains" value="QH/XH=1-138"/>
</dbReference>
<dbReference type="PDB" id="8G29">
    <property type="method" value="X-ray"/>
    <property type="resolution" value="2.55 A"/>
    <property type="chains" value="1h/2h=1-138"/>
</dbReference>
<dbReference type="PDB" id="8G2A">
    <property type="method" value="X-ray"/>
    <property type="resolution" value="2.45 A"/>
    <property type="chains" value="1h/2h=1-138"/>
</dbReference>
<dbReference type="PDB" id="8G2B">
    <property type="method" value="X-ray"/>
    <property type="resolution" value="2.55 A"/>
    <property type="chains" value="1h/2h=1-138"/>
</dbReference>
<dbReference type="PDB" id="8G2C">
    <property type="method" value="X-ray"/>
    <property type="resolution" value="2.65 A"/>
    <property type="chains" value="1h/2h=1-138"/>
</dbReference>
<dbReference type="PDB" id="8G2D">
    <property type="method" value="X-ray"/>
    <property type="resolution" value="2.70 A"/>
    <property type="chains" value="1h/2h=1-138"/>
</dbReference>
<dbReference type="PDB" id="8T8B">
    <property type="method" value="X-ray"/>
    <property type="resolution" value="2.65 A"/>
    <property type="chains" value="1h/2h=1-138"/>
</dbReference>
<dbReference type="PDB" id="8T8C">
    <property type="method" value="X-ray"/>
    <property type="resolution" value="2.60 A"/>
    <property type="chains" value="1h/2h=1-138"/>
</dbReference>
<dbReference type="PDB" id="8UD6">
    <property type="method" value="X-ray"/>
    <property type="resolution" value="2.70 A"/>
    <property type="chains" value="1h/2h=1-138"/>
</dbReference>
<dbReference type="PDB" id="8UD7">
    <property type="method" value="X-ray"/>
    <property type="resolution" value="2.55 A"/>
    <property type="chains" value="1h/2h=1-138"/>
</dbReference>
<dbReference type="PDB" id="8UD8">
    <property type="method" value="X-ray"/>
    <property type="resolution" value="2.60 A"/>
    <property type="chains" value="1h/2h=1-138"/>
</dbReference>
<dbReference type="PDB" id="8UVR">
    <property type="method" value="X-ray"/>
    <property type="resolution" value="2.60 A"/>
    <property type="chains" value="1h/2h=1-138"/>
</dbReference>
<dbReference type="PDB" id="8UVS">
    <property type="method" value="X-ray"/>
    <property type="resolution" value="2.75 A"/>
    <property type="chains" value="1h/2h=1-138"/>
</dbReference>
<dbReference type="PDB" id="8VTU">
    <property type="method" value="X-ray"/>
    <property type="resolution" value="2.40 A"/>
    <property type="chains" value="1h/2h=1-138"/>
</dbReference>
<dbReference type="PDB" id="8VTV">
    <property type="method" value="X-ray"/>
    <property type="resolution" value="2.55 A"/>
    <property type="chains" value="1h/2h=1-138"/>
</dbReference>
<dbReference type="PDB" id="8VTW">
    <property type="method" value="X-ray"/>
    <property type="resolution" value="2.35 A"/>
    <property type="chains" value="1h/2h=1-138"/>
</dbReference>
<dbReference type="PDB" id="8VTX">
    <property type="method" value="X-ray"/>
    <property type="resolution" value="2.40 A"/>
    <property type="chains" value="1h/2h=1-138"/>
</dbReference>
<dbReference type="PDB" id="8VTY">
    <property type="method" value="X-ray"/>
    <property type="resolution" value="2.60 A"/>
    <property type="chains" value="1h/2h=1-138"/>
</dbReference>
<dbReference type="PDB" id="9B00">
    <property type="method" value="X-ray"/>
    <property type="resolution" value="2.80 A"/>
    <property type="chains" value="1h/2h=1-138"/>
</dbReference>
<dbReference type="PDB" id="9D0J">
    <property type="method" value="X-ray"/>
    <property type="resolution" value="2.50 A"/>
    <property type="chains" value="1h/2h=1-138"/>
</dbReference>
<dbReference type="PDB" id="9D7R">
    <property type="method" value="X-ray"/>
    <property type="resolution" value="2.70 A"/>
    <property type="chains" value="1h/2h=1-138"/>
</dbReference>
<dbReference type="PDB" id="9D7S">
    <property type="method" value="X-ray"/>
    <property type="resolution" value="2.85 A"/>
    <property type="chains" value="1h/2h=1-138"/>
</dbReference>
<dbReference type="PDB" id="9D7T">
    <property type="method" value="X-ray"/>
    <property type="resolution" value="2.70 A"/>
    <property type="chains" value="1h/2h=1-138"/>
</dbReference>
<dbReference type="PDB" id="9DFC">
    <property type="method" value="X-ray"/>
    <property type="resolution" value="2.50 A"/>
    <property type="chains" value="1h/2h=1-138"/>
</dbReference>
<dbReference type="PDB" id="9DFD">
    <property type="method" value="X-ray"/>
    <property type="resolution" value="2.60 A"/>
    <property type="chains" value="1h/2h=1-138"/>
</dbReference>
<dbReference type="PDB" id="9DFE">
    <property type="method" value="X-ray"/>
    <property type="resolution" value="2.60 A"/>
    <property type="chains" value="1h/2h=1-138"/>
</dbReference>
<dbReference type="PDBsum" id="1EMI"/>
<dbReference type="PDBsum" id="1FJG"/>
<dbReference type="PDBsum" id="1FKA"/>
<dbReference type="PDBsum" id="1HNW"/>
<dbReference type="PDBsum" id="1HNX"/>
<dbReference type="PDBsum" id="1HNZ"/>
<dbReference type="PDBsum" id="1HR0"/>
<dbReference type="PDBsum" id="1I94"/>
<dbReference type="PDBsum" id="1I95"/>
<dbReference type="PDBsum" id="1I96"/>
<dbReference type="PDBsum" id="1I97"/>
<dbReference type="PDBsum" id="1IBK"/>
<dbReference type="PDBsum" id="1IBL"/>
<dbReference type="PDBsum" id="1IBM"/>
<dbReference type="PDBsum" id="1J5E"/>
<dbReference type="PDBsum" id="1JGO"/>
<dbReference type="PDBsum" id="1JGP"/>
<dbReference type="PDBsum" id="1JGQ"/>
<dbReference type="PDBsum" id="1ML5"/>
<dbReference type="PDBsum" id="1N32"/>
<dbReference type="PDBsum" id="1N33"/>
<dbReference type="PDBsum" id="1N34"/>
<dbReference type="PDBsum" id="1N36"/>
<dbReference type="PDBsum" id="1QD7"/>
<dbReference type="PDBsum" id="1VVJ"/>
<dbReference type="PDBsum" id="1VY4"/>
<dbReference type="PDBsum" id="1VY5"/>
<dbReference type="PDBsum" id="1VY6"/>
<dbReference type="PDBsum" id="1VY7"/>
<dbReference type="PDBsum" id="1XMO"/>
<dbReference type="PDBsum" id="1XMQ"/>
<dbReference type="PDBsum" id="1XNQ"/>
<dbReference type="PDBsum" id="1XNR"/>
<dbReference type="PDBsum" id="2E5L"/>
<dbReference type="PDBsum" id="2F4V"/>
<dbReference type="PDBsum" id="2HHH"/>
<dbReference type="PDBsum" id="2UU9"/>
<dbReference type="PDBsum" id="2UUA"/>
<dbReference type="PDBsum" id="2UUB"/>
<dbReference type="PDBsum" id="2UUC"/>
<dbReference type="PDBsum" id="2UXB"/>
<dbReference type="PDBsum" id="2UXC"/>
<dbReference type="PDBsum" id="2UXD"/>
<dbReference type="PDBsum" id="2VQE"/>
<dbReference type="PDBsum" id="2VQF"/>
<dbReference type="PDBsum" id="2ZM6"/>
<dbReference type="PDBsum" id="3OTO"/>
<dbReference type="PDBsum" id="3T1H"/>
<dbReference type="PDBsum" id="3T1Y"/>
<dbReference type="PDBsum" id="4AQY"/>
<dbReference type="PDBsum" id="4B3M"/>
<dbReference type="PDBsum" id="4B3R"/>
<dbReference type="PDBsum" id="4B3S"/>
<dbReference type="PDBsum" id="4B3T"/>
<dbReference type="PDBsum" id="4DR1"/>
<dbReference type="PDBsum" id="4DR2"/>
<dbReference type="PDBsum" id="4DR3"/>
<dbReference type="PDBsum" id="4DR4"/>
<dbReference type="PDBsum" id="4DR5"/>
<dbReference type="PDBsum" id="4DR6"/>
<dbReference type="PDBsum" id="4DR7"/>
<dbReference type="PDBsum" id="4DUY"/>
<dbReference type="PDBsum" id="4DUZ"/>
<dbReference type="PDBsum" id="4DV0"/>
<dbReference type="PDBsum" id="4DV1"/>
<dbReference type="PDBsum" id="4DV2"/>
<dbReference type="PDBsum" id="4DV3"/>
<dbReference type="PDBsum" id="4DV4"/>
<dbReference type="PDBsum" id="4DV5"/>
<dbReference type="PDBsum" id="4DV6"/>
<dbReference type="PDBsum" id="4DV7"/>
<dbReference type="PDBsum" id="4GKJ"/>
<dbReference type="PDBsum" id="4GKK"/>
<dbReference type="PDBsum" id="4JI0"/>
<dbReference type="PDBsum" id="4JI1"/>
<dbReference type="PDBsum" id="4JI2"/>
<dbReference type="PDBsum" id="4JI3"/>
<dbReference type="PDBsum" id="4JI4"/>
<dbReference type="PDBsum" id="4JI5"/>
<dbReference type="PDBsum" id="4JI6"/>
<dbReference type="PDBsum" id="4JI7"/>
<dbReference type="PDBsum" id="4JI8"/>
<dbReference type="PDBsum" id="4JV5"/>
<dbReference type="PDBsum" id="4JYA"/>
<dbReference type="PDBsum" id="4K0K"/>
<dbReference type="PDBsum" id="4KHP"/>
<dbReference type="PDBsum" id="4L47"/>
<dbReference type="PDBsum" id="4L71"/>
<dbReference type="PDBsum" id="4LEL"/>
<dbReference type="PDBsum" id="4LF4"/>
<dbReference type="PDBsum" id="4LF5"/>
<dbReference type="PDBsum" id="4LF6"/>
<dbReference type="PDBsum" id="4LF7"/>
<dbReference type="PDBsum" id="4LF8"/>
<dbReference type="PDBsum" id="4LF9"/>
<dbReference type="PDBsum" id="4LFA"/>
<dbReference type="PDBsum" id="4LFB"/>
<dbReference type="PDBsum" id="4LFC"/>
<dbReference type="PDBsum" id="4LFZ"/>
<dbReference type="PDBsum" id="4LNT"/>
<dbReference type="PDBsum" id="4LSK"/>
<dbReference type="PDBsum" id="4LT8"/>
<dbReference type="PDBsum" id="4NXM"/>
<dbReference type="PDBsum" id="4NXN"/>
<dbReference type="PDBsum" id="4OX9"/>
<dbReference type="PDBsum" id="4P6F"/>
<dbReference type="PDBsum" id="4P70"/>
<dbReference type="PDBsum" id="4TUA"/>
<dbReference type="PDBsum" id="4TUB"/>
<dbReference type="PDBsum" id="4TUC"/>
<dbReference type="PDBsum" id="4TUD"/>
<dbReference type="PDBsum" id="4TUE"/>
<dbReference type="PDBsum" id="4V42"/>
<dbReference type="PDBsum" id="4V49"/>
<dbReference type="PDBsum" id="4V4A"/>
<dbReference type="PDBsum" id="4V4G"/>
<dbReference type="PDBsum" id="4V4I"/>
<dbReference type="PDBsum" id="4V4P"/>
<dbReference type="PDBsum" id="4V4R"/>
<dbReference type="PDBsum" id="4V4S"/>
<dbReference type="PDBsum" id="4V4T"/>
<dbReference type="PDBsum" id="4V4X"/>
<dbReference type="PDBsum" id="4V4Y"/>
<dbReference type="PDBsum" id="4V4Z"/>
<dbReference type="PDBsum" id="4V51"/>
<dbReference type="PDBsum" id="4V5A"/>
<dbReference type="PDBsum" id="4V5C"/>
<dbReference type="PDBsum" id="4V5D"/>
<dbReference type="PDBsum" id="4V5E"/>
<dbReference type="PDBsum" id="4V5F"/>
<dbReference type="PDBsum" id="4V5G"/>
<dbReference type="PDBsum" id="4V5J"/>
<dbReference type="PDBsum" id="4V5K"/>
<dbReference type="PDBsum" id="4V5L"/>
<dbReference type="PDBsum" id="4V5M"/>
<dbReference type="PDBsum" id="4V5N"/>
<dbReference type="PDBsum" id="4V5P"/>
<dbReference type="PDBsum" id="4V5Q"/>
<dbReference type="PDBsum" id="4V5R"/>
<dbReference type="PDBsum" id="4V5S"/>
<dbReference type="PDBsum" id="4V68"/>
<dbReference type="PDBsum" id="4V6A"/>
<dbReference type="PDBsum" id="4V6F"/>
<dbReference type="PDBsum" id="4V6G"/>
<dbReference type="PDBsum" id="4V7J"/>
<dbReference type="PDBsum" id="4V7K"/>
<dbReference type="PDBsum" id="4V7L"/>
<dbReference type="PDBsum" id="4V7M"/>
<dbReference type="PDBsum" id="4V7W"/>
<dbReference type="PDBsum" id="4V7X"/>
<dbReference type="PDBsum" id="4V7Y"/>
<dbReference type="PDBsum" id="4V7Z"/>
<dbReference type="PDBsum" id="4V87"/>
<dbReference type="PDBsum" id="4V8A"/>
<dbReference type="PDBsum" id="4V8B"/>
<dbReference type="PDBsum" id="4V8C"/>
<dbReference type="PDBsum" id="4V8D"/>
<dbReference type="PDBsum" id="4V8E"/>
<dbReference type="PDBsum" id="4V8F"/>
<dbReference type="PDBsum" id="4V8G"/>
<dbReference type="PDBsum" id="4V8H"/>
<dbReference type="PDBsum" id="4V8I"/>
<dbReference type="PDBsum" id="4V8J"/>
<dbReference type="PDBsum" id="4V8N"/>
<dbReference type="PDBsum" id="4V8O"/>
<dbReference type="PDBsum" id="4V8Q"/>
<dbReference type="PDBsum" id="4V8U"/>
<dbReference type="PDBsum" id="4V8X"/>
<dbReference type="PDBsum" id="4V90"/>
<dbReference type="PDBsum" id="4V95"/>
<dbReference type="PDBsum" id="4V97"/>
<dbReference type="PDBsum" id="4V9A"/>
<dbReference type="PDBsum" id="4V9B"/>
<dbReference type="PDBsum" id="4V9H"/>
<dbReference type="PDBsum" id="4V9I"/>
<dbReference type="PDBsum" id="4V9R"/>
<dbReference type="PDBsum" id="4V9S"/>
<dbReference type="PDBsum" id="4W2E"/>
<dbReference type="PDBsum" id="4W2F"/>
<dbReference type="PDBsum" id="4W2G"/>
<dbReference type="PDBsum" id="4W2H"/>
<dbReference type="PDBsum" id="4W2I"/>
<dbReference type="PDBsum" id="4W4G"/>
<dbReference type="PDBsum" id="4WPO"/>
<dbReference type="PDBsum" id="4WQ1"/>
<dbReference type="PDBsum" id="4WQF"/>
<dbReference type="PDBsum" id="4WQR"/>
<dbReference type="PDBsum" id="4WQU"/>
<dbReference type="PDBsum" id="4WQY"/>
<dbReference type="PDBsum" id="4WR6"/>
<dbReference type="PDBsum" id="4WRA"/>
<dbReference type="PDBsum" id="4WRO"/>
<dbReference type="PDBsum" id="4WSD"/>
<dbReference type="PDBsum" id="4WSM"/>
<dbReference type="PDBsum" id="4WT1"/>
<dbReference type="PDBsum" id="4WT8"/>
<dbReference type="PDBsum" id="4WU1"/>
<dbReference type="PDBsum" id="4WZD"/>
<dbReference type="PDBsum" id="4WZO"/>
<dbReference type="PDBsum" id="4X62"/>
<dbReference type="PDBsum" id="4X64"/>
<dbReference type="PDBsum" id="4X65"/>
<dbReference type="PDBsum" id="4X66"/>
<dbReference type="PDBsum" id="4Y4O"/>
<dbReference type="PDBsum" id="4Y4P"/>
<dbReference type="PDBsum" id="4YHH"/>
<dbReference type="PDBsum" id="4YPB"/>
<dbReference type="PDBsum" id="4YY3"/>
<dbReference type="PDBsum" id="4YZV"/>
<dbReference type="PDBsum" id="4Z3S"/>
<dbReference type="PDBsum" id="4Z8C"/>
<dbReference type="PDBsum" id="4ZER"/>
<dbReference type="PDBsum" id="4ZSN"/>
<dbReference type="PDBsum" id="5A9Z"/>
<dbReference type="PDBsum" id="5AA0"/>
<dbReference type="PDBsum" id="5BR8"/>
<dbReference type="PDBsum" id="5CZP"/>
<dbReference type="PDBsum" id="5D8B"/>
<dbReference type="PDBsum" id="5DFE"/>
<dbReference type="PDBsum" id="5DOX"/>
<dbReference type="PDBsum" id="5DOY"/>
<dbReference type="PDBsum" id="5E7K"/>
<dbReference type="PDBsum" id="5E81"/>
<dbReference type="PDBsum" id="5EL4"/>
<dbReference type="PDBsum" id="5EL5"/>
<dbReference type="PDBsum" id="5EL6"/>
<dbReference type="PDBsum" id="5EL7"/>
<dbReference type="PDBsum" id="5F8K"/>
<dbReference type="PDBsum" id="5FDU"/>
<dbReference type="PDBsum" id="5FDV"/>
<dbReference type="PDBsum" id="5HAU"/>
<dbReference type="PDBsum" id="5HCP"/>
<dbReference type="PDBsum" id="5HCQ"/>
<dbReference type="PDBsum" id="5HCR"/>
<dbReference type="PDBsum" id="5HD1"/>
<dbReference type="PDBsum" id="5IB7"/>
<dbReference type="PDBsum" id="5IB8"/>
<dbReference type="PDBsum" id="5IBB"/>
<dbReference type="PDBsum" id="5IMQ"/>
<dbReference type="PDBsum" id="5IMR"/>
<dbReference type="PDBsum" id="5IWA"/>
<dbReference type="PDBsum" id="5J30"/>
<dbReference type="PDBsum" id="5J3C"/>
<dbReference type="PDBsum" id="5J4B"/>
<dbReference type="PDBsum" id="5J4C"/>
<dbReference type="PDBsum" id="5J8B"/>
<dbReference type="PDBsum" id="5LMN"/>
<dbReference type="PDBsum" id="5LMO"/>
<dbReference type="PDBsum" id="5LMP"/>
<dbReference type="PDBsum" id="5LMQ"/>
<dbReference type="PDBsum" id="5LMR"/>
<dbReference type="PDBsum" id="5LMS"/>
<dbReference type="PDBsum" id="5LMT"/>
<dbReference type="PDBsum" id="5LMU"/>
<dbReference type="PDBsum" id="5LMV"/>
<dbReference type="PDBsum" id="5NDJ"/>
<dbReference type="PDBsum" id="5NDK"/>
<dbReference type="PDBsum" id="5OT7"/>
<dbReference type="PDBsum" id="5UQ7"/>
<dbReference type="PDBsum" id="5UQ8"/>
<dbReference type="PDBsum" id="5VP2"/>
<dbReference type="PDBsum" id="5VPO"/>
<dbReference type="PDBsum" id="5VPP"/>
<dbReference type="PDBsum" id="5W4K"/>
<dbReference type="PDBsum" id="5WIS"/>
<dbReference type="PDBsum" id="5WIT"/>
<dbReference type="PDBsum" id="5WNP"/>
<dbReference type="PDBsum" id="5WNQ"/>
<dbReference type="PDBsum" id="5WNR"/>
<dbReference type="PDBsum" id="5WNS"/>
<dbReference type="PDBsum" id="5WNT"/>
<dbReference type="PDBsum" id="5WNU"/>
<dbReference type="PDBsum" id="5WNV"/>
<dbReference type="PDBsum" id="5ZLU"/>
<dbReference type="PDBsum" id="6BUW"/>
<dbReference type="PDBsum" id="6BZ6"/>
<dbReference type="PDBsum" id="6BZ7"/>
<dbReference type="PDBsum" id="6BZ8"/>
<dbReference type="PDBsum" id="6C5L"/>
<dbReference type="PDBsum" id="6CAE"/>
<dbReference type="PDBsum" id="6CAO"/>
<dbReference type="PDBsum" id="6CAP"/>
<dbReference type="PDBsum" id="6CAQ"/>
<dbReference type="PDBsum" id="6CAR"/>
<dbReference type="PDBsum" id="6CAS"/>
<dbReference type="PDBsum" id="6CFJ"/>
<dbReference type="PDBsum" id="6CFK"/>
<dbReference type="PDBsum" id="6CFL"/>
<dbReference type="PDBsum" id="6CZR"/>
<dbReference type="PDBsum" id="6DTI"/>
<dbReference type="PDBsum" id="6FKR"/>
<dbReference type="PDBsum" id="6GSJ"/>
<dbReference type="PDBsum" id="6GSK"/>
<dbReference type="PDBsum" id="6GSL"/>
<dbReference type="PDBsum" id="6GZQ"/>
<dbReference type="PDBsum" id="6GZX"/>
<dbReference type="PDBsum" id="6GZZ"/>
<dbReference type="PDBsum" id="6MKN"/>
<dbReference type="PDBsum" id="6MPF"/>
<dbReference type="PDBsum" id="6MPI"/>
<dbReference type="PDBsum" id="6N9E"/>
<dbReference type="PDBsum" id="6N9F"/>
<dbReference type="PDBsum" id="6ND5"/>
<dbReference type="PDBsum" id="6ND6"/>
<dbReference type="PDBsum" id="6NDK"/>
<dbReference type="PDBsum" id="6NSH"/>
<dbReference type="PDBsum" id="6NTA"/>
<dbReference type="PDBsum" id="6NUO"/>
<dbReference type="PDBsum" id="6NWY"/>
<dbReference type="PDBsum" id="6NY6"/>
<dbReference type="PDBsum" id="6O3M"/>
<dbReference type="PDBsum" id="6O97"/>
<dbReference type="PDBsum" id="6OF1"/>
<dbReference type="PDBsum" id="6OF6"/>
<dbReference type="PDBsum" id="6OJ2"/>
<dbReference type="PDBsum" id="6OPE"/>
<dbReference type="PDBsum" id="6ORD"/>
<dbReference type="PDBsum" id="6OSI"/>
<dbReference type="PDBsum" id="6OTR"/>
<dbReference type="PDBsum" id="6OXA"/>
<dbReference type="PDBsum" id="6OXI"/>
<dbReference type="PDBsum" id="6Q95"/>
<dbReference type="PDBsum" id="6QNQ"/>
<dbReference type="PDBsum" id="6QNR"/>
<dbReference type="PDBsum" id="6UCQ"/>
<dbReference type="PDBsum" id="6UO1"/>
<dbReference type="PDBsum" id="6XHV"/>
<dbReference type="PDBsum" id="6XHW"/>
<dbReference type="PDBsum" id="6XHX"/>
<dbReference type="PDBsum" id="6XHY"/>
<dbReference type="PDBsum" id="6XQD"/>
<dbReference type="PDBsum" id="6XQE"/>
<dbReference type="PDBsum" id="7AZO"/>
<dbReference type="PDBsum" id="7AZS"/>
<dbReference type="PDBsum" id="7DUG"/>
<dbReference type="PDBsum" id="7DUH"/>
<dbReference type="PDBsum" id="7DUI"/>
<dbReference type="PDBsum" id="7DUJ"/>
<dbReference type="PDBsum" id="7DUK"/>
<dbReference type="PDBsum" id="7DUL"/>
<dbReference type="PDBsum" id="7JQL"/>
<dbReference type="PDBsum" id="7JQM"/>
<dbReference type="PDBsum" id="7LH5"/>
<dbReference type="PDBsum" id="7MD7"/>
<dbReference type="PDBsum" id="7RQ8"/>
<dbReference type="PDBsum" id="7RQ9"/>
<dbReference type="PDBsum" id="7RQA"/>
<dbReference type="PDBsum" id="7RQB"/>
<dbReference type="PDBsum" id="7RQC"/>
<dbReference type="PDBsum" id="7RQD"/>
<dbReference type="PDBsum" id="7RQE"/>
<dbReference type="PDBsum" id="7U2H"/>
<dbReference type="PDBsum" id="7U2I"/>
<dbReference type="PDBsum" id="7U2J"/>
<dbReference type="PDBsum" id="7V2L"/>
<dbReference type="PDBsum" id="7V2M"/>
<dbReference type="PDBsum" id="7V2N"/>
<dbReference type="PDBsum" id="7V2O"/>
<dbReference type="PDBsum" id="7V2P"/>
<dbReference type="PDBsum" id="7V2Q"/>
<dbReference type="PDBsum" id="8CVJ"/>
<dbReference type="PDBsum" id="8CVK"/>
<dbReference type="PDBsum" id="8CVL"/>
<dbReference type="PDBsum" id="8EKB"/>
<dbReference type="PDBsum" id="8EV6"/>
<dbReference type="PDBsum" id="8EV7"/>
<dbReference type="PDBsum" id="8FC1"/>
<dbReference type="PDBsum" id="8FC2"/>
<dbReference type="PDBsum" id="8FC3"/>
<dbReference type="PDBsum" id="8FC4"/>
<dbReference type="PDBsum" id="8FC5"/>
<dbReference type="PDBsum" id="8FC6"/>
<dbReference type="PDBsum" id="8FOM"/>
<dbReference type="PDBsum" id="8FON"/>
<dbReference type="PDBsum" id="8G29"/>
<dbReference type="PDBsum" id="8G2A"/>
<dbReference type="PDBsum" id="8G2B"/>
<dbReference type="PDBsum" id="8G2C"/>
<dbReference type="PDBsum" id="8G2D"/>
<dbReference type="PDBsum" id="8T8B"/>
<dbReference type="PDBsum" id="8T8C"/>
<dbReference type="PDBsum" id="8UD6"/>
<dbReference type="PDBsum" id="8UD7"/>
<dbReference type="PDBsum" id="8UD8"/>
<dbReference type="PDBsum" id="8UVR"/>
<dbReference type="PDBsum" id="8UVS"/>
<dbReference type="PDBsum" id="8VTU"/>
<dbReference type="PDBsum" id="8VTV"/>
<dbReference type="PDBsum" id="8VTW"/>
<dbReference type="PDBsum" id="8VTX"/>
<dbReference type="PDBsum" id="8VTY"/>
<dbReference type="PDBsum" id="9B00"/>
<dbReference type="PDBsum" id="9D0J"/>
<dbReference type="PDBsum" id="9D7R"/>
<dbReference type="PDBsum" id="9D7S"/>
<dbReference type="PDBsum" id="9D7T"/>
<dbReference type="PDBsum" id="9DFC"/>
<dbReference type="PDBsum" id="9DFD"/>
<dbReference type="PDBsum" id="9DFE"/>
<dbReference type="EMDB" id="EMD-0101"/>
<dbReference type="EMDB" id="EMD-0104"/>
<dbReference type="EMDB" id="EMD-0105"/>
<dbReference type="EMDB" id="EMD-31655"/>
<dbReference type="EMDB" id="EMD-31656"/>
<dbReference type="EMDB" id="EMD-31657"/>
<dbReference type="EMDB" id="EMD-31658"/>
<dbReference type="EMDB" id="EMD-31659"/>
<dbReference type="EMDB" id="EMD-31660"/>
<dbReference type="EMDB" id="EMD-3852"/>
<dbReference type="EMDB" id="EMD-4077"/>
<dbReference type="EMDB" id="EMD-4475"/>
<dbReference type="EMDB" id="EMD-6934"/>
<dbReference type="SMR" id="P0DOY9"/>
<dbReference type="IntAct" id="P0DOY9">
    <property type="interactions" value="10"/>
</dbReference>
<dbReference type="DrugBank" id="DB08185">
    <property type="generic name" value="2-METHYLTHIO-N6-ISOPENTENYL-ADENOSINE-5'-MONOPHOSPHATE"/>
</dbReference>
<dbReference type="EnsemblBacteria" id="BAD71501">
    <property type="protein sequence ID" value="BAD71501"/>
    <property type="gene ID" value="BAD71501"/>
</dbReference>
<dbReference type="GeneID" id="3169811"/>
<dbReference type="KEGG" id="ttj:TTHA1678"/>
<dbReference type="eggNOG" id="COG0096">
    <property type="taxonomic scope" value="Bacteria"/>
</dbReference>
<dbReference type="HOGENOM" id="CLU_098428_0_2_0"/>
<dbReference type="EvolutionaryTrace" id="P0DOY9"/>
<dbReference type="Proteomes" id="UP000000532">
    <property type="component" value="Chromosome"/>
</dbReference>
<dbReference type="GO" id="GO:1990904">
    <property type="term" value="C:ribonucleoprotein complex"/>
    <property type="evidence" value="ECO:0007669"/>
    <property type="project" value="UniProtKB-KW"/>
</dbReference>
<dbReference type="GO" id="GO:0005840">
    <property type="term" value="C:ribosome"/>
    <property type="evidence" value="ECO:0007669"/>
    <property type="project" value="UniProtKB-KW"/>
</dbReference>
<dbReference type="GO" id="GO:0019843">
    <property type="term" value="F:rRNA binding"/>
    <property type="evidence" value="ECO:0007669"/>
    <property type="project" value="UniProtKB-UniRule"/>
</dbReference>
<dbReference type="GO" id="GO:0003735">
    <property type="term" value="F:structural constituent of ribosome"/>
    <property type="evidence" value="ECO:0007669"/>
    <property type="project" value="InterPro"/>
</dbReference>
<dbReference type="GO" id="GO:0006412">
    <property type="term" value="P:translation"/>
    <property type="evidence" value="ECO:0007669"/>
    <property type="project" value="UniProtKB-UniRule"/>
</dbReference>
<dbReference type="FunFam" id="3.30.1370.30:FF:000002">
    <property type="entry name" value="30S ribosomal protein S8"/>
    <property type="match status" value="1"/>
</dbReference>
<dbReference type="FunFam" id="3.30.1490.10:FF:000001">
    <property type="entry name" value="30S ribosomal protein S8"/>
    <property type="match status" value="1"/>
</dbReference>
<dbReference type="Gene3D" id="3.30.1370.30">
    <property type="match status" value="1"/>
</dbReference>
<dbReference type="Gene3D" id="3.30.1490.10">
    <property type="match status" value="1"/>
</dbReference>
<dbReference type="HAMAP" id="MF_01302_B">
    <property type="entry name" value="Ribosomal_uS8_B"/>
    <property type="match status" value="1"/>
</dbReference>
<dbReference type="InterPro" id="IPR000630">
    <property type="entry name" value="Ribosomal_uS8"/>
</dbReference>
<dbReference type="InterPro" id="IPR047863">
    <property type="entry name" value="Ribosomal_uS8_CS"/>
</dbReference>
<dbReference type="InterPro" id="IPR035987">
    <property type="entry name" value="Ribosomal_uS8_sf"/>
</dbReference>
<dbReference type="NCBIfam" id="NF001109">
    <property type="entry name" value="PRK00136.1"/>
    <property type="match status" value="1"/>
</dbReference>
<dbReference type="PANTHER" id="PTHR11758">
    <property type="entry name" value="40S RIBOSOMAL PROTEIN S15A"/>
    <property type="match status" value="1"/>
</dbReference>
<dbReference type="Pfam" id="PF00410">
    <property type="entry name" value="Ribosomal_S8"/>
    <property type="match status" value="1"/>
</dbReference>
<dbReference type="SUPFAM" id="SSF56047">
    <property type="entry name" value="Ribosomal protein S8"/>
    <property type="match status" value="1"/>
</dbReference>
<dbReference type="PROSITE" id="PS00053">
    <property type="entry name" value="RIBOSOMAL_S8"/>
    <property type="match status" value="1"/>
</dbReference>
<keyword id="KW-0002">3D-structure</keyword>
<keyword id="KW-0903">Direct protein sequencing</keyword>
<keyword id="KW-1185">Reference proteome</keyword>
<keyword id="KW-0687">Ribonucleoprotein</keyword>
<keyword id="KW-0689">Ribosomal protein</keyword>
<keyword id="KW-0694">RNA-binding</keyword>
<keyword id="KW-0699">rRNA-binding</keyword>
<name>RS8_THET8</name>
<comment type="function">
    <text>One of the primary rRNA binding proteins, it binds directly to 16S rRNA where it helps nucleate assembly of the platform of the 30S subunit central domain. The combined cluster of proteins S8, S12 and S17 appears to hold together the shoulder and platform of the 30S subunit.</text>
</comment>
<comment type="subunit">
    <text>Part of the 30S ribosomal subunit. Contacts proteins S2, S5 and S12.</text>
</comment>
<comment type="mass spectrometry"/>
<comment type="similarity">
    <text evidence="2">Belongs to the universal ribosomal protein uS8 family.</text>
</comment>
<reference key="1">
    <citation type="submission" date="2004-11" db="EMBL/GenBank/DDBJ databases">
        <title>Complete genome sequence of Thermus thermophilus HB8.</title>
        <authorList>
            <person name="Masui R."/>
            <person name="Kurokawa K."/>
            <person name="Nakagawa N."/>
            <person name="Tokunaga F."/>
            <person name="Koyama Y."/>
            <person name="Shibata T."/>
            <person name="Oshima T."/>
            <person name="Yokoyama S."/>
            <person name="Yasunaga T."/>
            <person name="Kuramitsu S."/>
        </authorList>
    </citation>
    <scope>NUCLEOTIDE SEQUENCE [LARGE SCALE GENOMIC DNA]</scope>
    <source>
        <strain>ATCC 27634 / DSM 579 / HB8</strain>
    </source>
</reference>
<reference key="2">
    <citation type="journal article" date="1994" name="Eur. J. Biochem.">
        <title>Purification and characterization of the 30S ribosomal proteins from the bacterium Thermus thermophilus.</title>
        <authorList>
            <person name="Tsiboli P."/>
            <person name="Herfurth E."/>
            <person name="Choli T."/>
        </authorList>
    </citation>
    <scope>PROTEIN SEQUENCE OF 1-28</scope>
</reference>
<reference key="3">
    <citation type="journal article" date="2005" name="Proteomics">
        <title>Extending ribosomal protein identifications to unsequenced bacterial strains using matrix-assisted laser desorption/ionization mass spectrometry.</title>
        <authorList>
            <person name="Suh M.-J."/>
            <person name="Hamburg D.M."/>
            <person name="Gregory S.T."/>
            <person name="Dahlberg A.E."/>
            <person name="Limbach P.A."/>
        </authorList>
    </citation>
    <scope>MASS SPECTROMETRY</scope>
    <source>
        <strain>ATCC 27634 / DSM 579 / HB8</strain>
    </source>
</reference>
<reference key="4">
    <citation type="journal article" date="1999" name="Nature">
        <title>Structure of a bacterial 30S ribosomal subunit at 5.5 A resolution.</title>
        <authorList>
            <person name="Clemons W.M. Jr."/>
            <person name="May J.L.C."/>
            <person name="Wimberly B.T."/>
            <person name="McCutcheon J.P."/>
            <person name="Capel M.S."/>
            <person name="Ramakrishnan V."/>
        </authorList>
    </citation>
    <scope>X-RAY CRYSTALLOGRAPHY (5.5 ANGSTROMS) OF THE 30S SUBUNIT</scope>
</reference>
<reference key="5">
    <citation type="journal article" date="2000" name="Nature">
        <title>Structure of the 30S ribosomal subunit.</title>
        <authorList>
            <person name="Wimberly B.T."/>
            <person name="Brodersen D.E."/>
            <person name="Clemons W.M. Jr."/>
            <person name="Morgan-Warren R.J."/>
            <person name="Carter A.P."/>
            <person name="Vonrhein C."/>
            <person name="Hartsch T."/>
            <person name="Ramakrishnan V."/>
        </authorList>
    </citation>
    <scope>X-RAY CRYSTALLOGRAPHY (3.05 ANGSTROMS) OF THE 30S SUBUNIT</scope>
</reference>
<reference key="6">
    <citation type="journal article" date="2000" name="Cell">
        <title>Structure of functionally activated small ribosomal subunit at 3.3 A resolution.</title>
        <authorList>
            <person name="Schluenzen F."/>
            <person name="Tocilj A."/>
            <person name="Zarivach R."/>
            <person name="Harms J."/>
            <person name="Gluehmann M."/>
            <person name="Janell D."/>
            <person name="Bashan A."/>
            <person name="Bartels H."/>
            <person name="Agmon I."/>
            <person name="Franceschi F."/>
            <person name="Yonath A."/>
        </authorList>
    </citation>
    <scope>X-RAY CRYSTALLOGRAPHY (3.3 ANGSTROMS) OF THE 30S SUBUNIT</scope>
</reference>
<reference key="7">
    <citation type="journal article" date="2000" name="Cell">
        <title>The structural basis for the action of the antibiotics tetracycline, pactamycin, and hygromycin B on the 30S ribosomal subunit.</title>
        <authorList>
            <person name="Brodersen D.E."/>
            <person name="Clemons W.M. Jr."/>
            <person name="Carter A.P."/>
            <person name="Morgan-Warren R.J."/>
            <person name="Wimberly B.T."/>
            <person name="Ramakrishnan V."/>
        </authorList>
    </citation>
    <scope>X-RAY CRYSTALLOGRAPHY (3.3 ANGSTROMS) OF THE 30S SUBUNIT</scope>
</reference>
<reference key="8">
    <citation type="journal article" date="2000" name="Nature">
        <title>Functional insights from the structure of the 30S ribosomal subunit and its interactions with antibiotics.</title>
        <authorList>
            <person name="Carter A.P."/>
            <person name="Clemons W.M. Jr."/>
            <person name="Brodersen D.E."/>
            <person name="Morgan-Warren R.J."/>
            <person name="Wimberly B.T."/>
            <person name="Ramakrishnan V."/>
        </authorList>
    </citation>
    <scope>X-RAY CRYSTALLOGRAPHY (3.0 ANGSTROMS) OF THE 30S SUBUNIT</scope>
</reference>
<reference key="9">
    <citation type="journal article" date="2000" name="RNA">
        <title>The location of protein S8 and surrounding elements of 16S rRNA in the 70S ribosome from combined use of directed hydroxyl radical probing and X-ray crystallography.</title>
        <authorList>
            <person name="Lancaster L."/>
            <person name="Culver G.M."/>
            <person name="Yusupova G.Z."/>
            <person name="Cate J.H.D."/>
            <person name="Yusupov M.M."/>
            <person name="Noller H.F."/>
        </authorList>
    </citation>
    <scope>X-RAY CRYSTALLOGRAPHY (7.5 ANGSTROMS) OF THE RIBOSOME</scope>
</reference>
<reference key="10">
    <citation type="journal article" date="2001" name="Cell">
        <title>The path of messenger RNA through the ribosome.</title>
        <authorList>
            <person name="Yusupova G.Z."/>
            <person name="Yusupov M.M."/>
            <person name="Cate J.H.D."/>
            <person name="Noller H.F."/>
        </authorList>
    </citation>
    <scope>X-RAY CRYSTALLOGRAPHY (5.0 ANGSTROMS) OF THE RIBOSOME</scope>
</reference>
<reference key="11">
    <citation type="journal article" date="2001" name="EMBO J.">
        <title>Crystal structures of complexes of the small ribosomal subunit with tetracycline, edeine and IF3.</title>
        <authorList>
            <person name="Pioletti M."/>
            <person name="Schluenzen F."/>
            <person name="Harms J."/>
            <person name="Zarivach R."/>
            <person name="Gluehmann M."/>
            <person name="Avila H."/>
            <person name="Bashan A."/>
            <person name="Bartels H."/>
            <person name="Auerbach T."/>
            <person name="Jacobi C."/>
            <person name="Hartsch T."/>
            <person name="Yonath A."/>
            <person name="Franceschi F."/>
        </authorList>
    </citation>
    <scope>X-RAY CRYSTALLOGRAPHY (3.2 ANGSTROMS) OF THE 30S SUBUNIT</scope>
</reference>
<reference key="12">
    <citation type="journal article" date="2001" name="Science">
        <title>Crystal structure of an initiation factor bound to the 30S ribosomal subunit.</title>
        <authorList>
            <person name="Carter A.P."/>
            <person name="Clemons W.M. Jr."/>
            <person name="Brodersen D.E."/>
            <person name="Morgan-Warren R.J."/>
            <person name="Hartsch T."/>
            <person name="Wimberly B.T."/>
            <person name="Ramakrishnan V."/>
        </authorList>
    </citation>
    <scope>X-RAY CRYSTALLOGRAPHY (3.2 ANGSTROMS) OF THE 30S SUBUNIT</scope>
</reference>
<reference key="13">
    <citation type="journal article" date="2001" name="Science">
        <title>Crystal structure of the ribosome at 5.5 A resolution.</title>
        <authorList>
            <person name="Yusupov M.M."/>
            <person name="Yusupova G.Z."/>
            <person name="Baucom A."/>
            <person name="Lieberman K."/>
            <person name="Earnest T.N."/>
            <person name="Cate J.H.D."/>
            <person name="Noller H.F."/>
        </authorList>
    </citation>
    <scope>X-RAY CRYSTALLOGRAPHY (5.5 ANGSTROMS) OF THE RIBOSOME</scope>
</reference>
<reference key="14">
    <citation type="journal article" date="2001" name="Science">
        <title>Recognition of cognate transfer RNA by the 30S ribosomal subunit.</title>
        <authorList>
            <person name="Ogle J.M."/>
            <person name="Brodersen D.E."/>
            <person name="Clemons W.M. Jr."/>
            <person name="Tarry M.J."/>
            <person name="Carter A.P."/>
            <person name="Ramakrishnan V."/>
        </authorList>
    </citation>
    <scope>X-RAY CRYSTALLOGRAPHY (3.11 ANGSTROMS) OF THE 30S SUBUNIT</scope>
</reference>
<reference key="15">
    <citation type="journal article" date="2002" name="J. Mol. Biol.">
        <title>Crystal structure of the 30S ribosomal subunit from Thermus thermophilus: structure of the proteins and their interactions with 16S RNA.</title>
        <authorList>
            <person name="Brodersen D.E."/>
            <person name="Clemons W.M. Jr."/>
            <person name="Carter A.P."/>
            <person name="Wimberly B.T."/>
            <person name="Ramakrishnan V."/>
        </authorList>
    </citation>
    <scope>X-RAY CRYSTALLOGRAPHY (3.05 ANGSTROMS) OF THE 30S SUBUNIT</scope>
</reference>
<reference key="16">
    <citation type="journal article" date="2005" name="Cell">
        <title>Crystal structures of the ribosome in complex with release factors RF1 and RF2 bound to a cognate stop codon.</title>
        <authorList>
            <person name="Petry S."/>
            <person name="Brodersen D.E."/>
            <person name="Murphy F.V."/>
            <person name="Dunham C.M."/>
            <person name="Selmer M."/>
            <person name="Tarry M.J."/>
            <person name="Kelley A.C."/>
            <person name="Ramakrishnan V."/>
        </authorList>
    </citation>
    <scope>X-RAY CRYSTALLOGRAPHY (5.90 ANGSTROMS) OF 70S RIBOSOME IN COMPLEX WITH RF1 OR RF2</scope>
    <scope>SUBUNIT</scope>
</reference>
<reference key="17">
    <citation type="journal article" date="2008" name="Science">
        <title>Insights into translational termination from the structure of RF2 bound to the ribosome.</title>
        <authorList>
            <person name="Weixlbaumer A."/>
            <person name="Jin H."/>
            <person name="Neubauer C."/>
            <person name="Voorhees R.M."/>
            <person name="Petry S."/>
            <person name="Kelley A.C."/>
            <person name="Ramakrishnan V."/>
        </authorList>
    </citation>
    <scope>X-RAY CRYSTALLOGRAPHY (3.45 ANGSTROMS) OF 70S RIBOSOME IN COMPLEX WITH RF2</scope>
    <scope>SUBUNIT</scope>
</reference>
<reference key="18">
    <citation type="journal article" date="2010" name="Proc. Natl. Acad. Sci. U.S.A.">
        <title>Structure of the 70S ribosome bound to release factor 2 and a substrate analog provides insights into catalysis of peptide release.</title>
        <authorList>
            <person name="Jin H."/>
            <person name="Kelley A.C."/>
            <person name="Loakes D."/>
            <person name="Ramakrishnan V."/>
        </authorList>
    </citation>
    <scope>X-RAY CRYSTALLOGRAPHY (3.10 ANGSTROMS) OF 70S RIBOSOME IN COMPLEX WITH RF2</scope>
    <scope>SUBUNIT</scope>
</reference>